<accession>Q5SHN7</accession>
<proteinExistence type="evidence at protein level"/>
<comment type="function">
    <text evidence="1">Involved in the binding of tRNA to the ribosomes (By similarity). Part of the top of the 30S subunit head.</text>
</comment>
<comment type="subunit">
    <text>Part of the 30S ribosomal subunit. Forms a tight complex with proteins S3 and S14. Also contacts protein S9.</text>
</comment>
<comment type="mass spectrometry" mass="11799.0" method="MALDI" evidence="2"/>
<comment type="similarity">
    <text evidence="1 4">Belongs to the universal ribosomal protein uS10 family.</text>
</comment>
<sequence length="105" mass="11930">MPKIRIKLRGFDHKTLDASAQKIVEAARRSGAQVSGPIPLPTRVRRFTVIRGPFKHKDSREHFELRTHNRLVDIINPNRKTIEQLMTLDLPTGVEIEIKTVGGGR</sequence>
<gene>
    <name type="primary">rpsJ</name>
    <name type="ordered locus">TTHA1693</name>
</gene>
<evidence type="ECO:0000255" key="1">
    <source>
        <dbReference type="HAMAP-Rule" id="MF_00508"/>
    </source>
</evidence>
<evidence type="ECO:0000269" key="2">
    <source>
    </source>
</evidence>
<evidence type="ECO:0000269" key="3">
    <source>
    </source>
</evidence>
<evidence type="ECO:0000305" key="4"/>
<evidence type="ECO:0007829" key="5">
    <source>
        <dbReference type="PDB" id="1XNQ"/>
    </source>
</evidence>
<evidence type="ECO:0007829" key="6">
    <source>
        <dbReference type="PDB" id="2VQE"/>
    </source>
</evidence>
<evidence type="ECO:0007829" key="7">
    <source>
        <dbReference type="PDB" id="2ZM6"/>
    </source>
</evidence>
<evidence type="ECO:0007829" key="8">
    <source>
        <dbReference type="PDB" id="4B3M"/>
    </source>
</evidence>
<evidence type="ECO:0007829" key="9">
    <source>
        <dbReference type="PDB" id="4B3R"/>
    </source>
</evidence>
<evidence type="ECO:0007829" key="10">
    <source>
        <dbReference type="PDB" id="4JI3"/>
    </source>
</evidence>
<reference key="1">
    <citation type="journal article" date="1995" name="Gene">
        <title>Direct linkage of str-, S10- and spc-related gene clusters in Thermus thermophilus HB8, and sequences of ribosomal proteins L4 and S10.</title>
        <authorList>
            <person name="Pfeiffer T."/>
            <person name="Jorcke D."/>
            <person name="Feltens R."/>
            <person name="Hartmann R.K."/>
        </authorList>
    </citation>
    <scope>NUCLEOTIDE SEQUENCE [GENOMIC DNA]</scope>
</reference>
<reference key="2">
    <citation type="submission" date="2004-11" db="EMBL/GenBank/DDBJ databases">
        <title>Complete genome sequence of Thermus thermophilus HB8.</title>
        <authorList>
            <person name="Masui R."/>
            <person name="Kurokawa K."/>
            <person name="Nakagawa N."/>
            <person name="Tokunaga F."/>
            <person name="Koyama Y."/>
            <person name="Shibata T."/>
            <person name="Oshima T."/>
            <person name="Yokoyama S."/>
            <person name="Yasunaga T."/>
            <person name="Kuramitsu S."/>
        </authorList>
    </citation>
    <scope>NUCLEOTIDE SEQUENCE [LARGE SCALE GENOMIC DNA]</scope>
    <source>
        <strain>ATCC 27634 / DSM 579 / HB8</strain>
    </source>
</reference>
<reference key="3">
    <citation type="journal article" date="1994" name="Eur. J. Biochem.">
        <title>Purification and characterization of the 30S ribosomal proteins from the bacterium Thermus thermophilus.</title>
        <authorList>
            <person name="Tsiboli P."/>
            <person name="Herfurth E."/>
            <person name="Choli T."/>
        </authorList>
    </citation>
    <scope>PROTEIN SEQUENCE OF 2-33</scope>
</reference>
<reference key="4">
    <citation type="journal article" date="2005" name="Proteomics">
        <title>Extending ribosomal protein identifications to unsequenced bacterial strains using matrix-assisted laser desorption/ionization mass spectrometry.</title>
        <authorList>
            <person name="Suh M.-J."/>
            <person name="Hamburg D.M."/>
            <person name="Gregory S.T."/>
            <person name="Dahlberg A.E."/>
            <person name="Limbach P.A."/>
        </authorList>
    </citation>
    <scope>MASS SPECTROMETRY</scope>
    <source>
        <strain>ATCC 27634 / DSM 579 / HB8</strain>
    </source>
</reference>
<reference key="5">
    <citation type="journal article" date="2000" name="Nature">
        <title>Structure of the 30S ribosomal subunit.</title>
        <authorList>
            <person name="Wimberly B.T."/>
            <person name="Brodersen D.E."/>
            <person name="Clemons W.M. Jr."/>
            <person name="Morgan-Warren R.J."/>
            <person name="Carter A.P."/>
            <person name="Vonrhein C."/>
            <person name="Hartsch T."/>
            <person name="Ramakrishnan V."/>
        </authorList>
    </citation>
    <scope>X-RAY CRYSTALLOGRAPHY (3.05 ANGSTROMS) OF THE 30S SUBUNIT</scope>
</reference>
<reference key="6">
    <citation type="journal article" date="2000" name="Cell">
        <title>Structure of functionally activated small ribosomal subunit at 3.3 A resolution.</title>
        <authorList>
            <person name="Schluenzen F."/>
            <person name="Tocilj A."/>
            <person name="Zarivach R."/>
            <person name="Harms J."/>
            <person name="Gluehmann M."/>
            <person name="Janell D."/>
            <person name="Bashan A."/>
            <person name="Bartels H."/>
            <person name="Agmon I."/>
            <person name="Franceschi F."/>
            <person name="Yonath A."/>
        </authorList>
    </citation>
    <scope>X-RAY CRYSTALLOGRAPHY (3.3 ANGSTROMS) OF THE 30S SUBUNIT</scope>
</reference>
<reference key="7">
    <citation type="journal article" date="2000" name="Cell">
        <title>The structural basis for the action of the antibiotics tetracycline, pactamycin, and hygromycin B on the 30S ribosomal subunit.</title>
        <authorList>
            <person name="Brodersen D.E."/>
            <person name="Clemons W.M. Jr."/>
            <person name="Carter A.P."/>
            <person name="Morgan-Warren R.J."/>
            <person name="Wimberly B.T."/>
            <person name="Ramakrishnan V."/>
        </authorList>
    </citation>
    <scope>X-RAY CRYSTALLOGRAPHY (3.3 ANGSTROMS) OF THE 30S SUBUNIT</scope>
</reference>
<reference key="8">
    <citation type="journal article" date="2000" name="Nature">
        <title>Functional insights from the structure of the 30S ribosomal subunit and its interactions with antibiotics.</title>
        <authorList>
            <person name="Carter A.P."/>
            <person name="Clemons W.M. Jr."/>
            <person name="Brodersen D.E."/>
            <person name="Morgan-Warren R.J."/>
            <person name="Wimberly B.T."/>
            <person name="Ramakrishnan V."/>
        </authorList>
    </citation>
    <scope>X-RAY CRYSTALLOGRAPHY (3.0 ANGSTROMS) OF THE 30S SUBUNIT</scope>
</reference>
<reference key="9">
    <citation type="journal article" date="2001" name="Cell">
        <title>The path of messenger RNA through the ribosome.</title>
        <authorList>
            <person name="Yusupova G.Z."/>
            <person name="Yusupov M.M."/>
            <person name="Cate J.H.D."/>
            <person name="Noller H.F."/>
        </authorList>
    </citation>
    <scope>X-RAY CRYSTALLOGRAPHY (5.0 ANGSTROMS) OF THE RIBOSOME</scope>
</reference>
<reference key="10">
    <citation type="journal article" date="2001" name="EMBO J.">
        <title>Crystal structures of complexes of the small ribosomal subunit with tetracycline, edeine and IF3.</title>
        <authorList>
            <person name="Pioletti M."/>
            <person name="Schluenzen F."/>
            <person name="Harms J."/>
            <person name="Zarivach R."/>
            <person name="Gluehmann M."/>
            <person name="Avila H."/>
            <person name="Bashan A."/>
            <person name="Bartels H."/>
            <person name="Auerbach T."/>
            <person name="Jacobi C."/>
            <person name="Hartsch T."/>
            <person name="Yonath A."/>
            <person name="Franceschi F."/>
        </authorList>
    </citation>
    <scope>X-RAY CRYSTALLOGRAPHY (3.2 ANGSTROMS) OF THE 30S SUBUNIT</scope>
</reference>
<reference key="11">
    <citation type="journal article" date="2001" name="Science">
        <title>Crystal structure of an initiation factor bound to the 30S ribosomal subunit.</title>
        <authorList>
            <person name="Carter A.P."/>
            <person name="Clemons W.M. Jr."/>
            <person name="Brodersen D.E."/>
            <person name="Morgan-Warren R.J."/>
            <person name="Hartsch T."/>
            <person name="Wimberly B.T."/>
            <person name="Ramakrishnan V."/>
        </authorList>
    </citation>
    <scope>X-RAY CRYSTALLOGRAPHY (3.2 ANGSTROMS) OF THE 30S SUBUNIT</scope>
</reference>
<reference key="12">
    <citation type="journal article" date="2001" name="Science">
        <title>Crystal structure of the ribosome at 5.5 A resolution.</title>
        <authorList>
            <person name="Yusupov M.M."/>
            <person name="Yusupova G.Z."/>
            <person name="Baucom A."/>
            <person name="Lieberman K."/>
            <person name="Earnest T.N."/>
            <person name="Cate J.H.D."/>
            <person name="Noller H.F."/>
        </authorList>
    </citation>
    <scope>X-RAY CRYSTALLOGRAPHY (5.5 ANGSTROMS) OF THE RIBOSOME</scope>
</reference>
<reference key="13">
    <citation type="journal article" date="2001" name="Science">
        <title>Recognition of cognate transfer RNA by the 30S ribosomal subunit.</title>
        <authorList>
            <person name="Ogle J.M."/>
            <person name="Brodersen D.E."/>
            <person name="Clemons W.M. Jr."/>
            <person name="Tarry M.J."/>
            <person name="Carter A.P."/>
            <person name="Ramakrishnan V."/>
        </authorList>
    </citation>
    <scope>X-RAY CRYSTALLOGRAPHY (3.11 ANGSTROMS) OF THE 30S SUBUNIT</scope>
</reference>
<reference key="14">
    <citation type="journal article" date="2002" name="J. Mol. Biol.">
        <title>Crystal structure of the 30S ribosomal subunit from Thermus thermophilus: structure of the proteins and their interactions with 16S RNA.</title>
        <authorList>
            <person name="Brodersen D.E."/>
            <person name="Clemons W.M. Jr."/>
            <person name="Carter A.P."/>
            <person name="Wimberly B.T."/>
            <person name="Ramakrishnan V."/>
        </authorList>
    </citation>
    <scope>X-RAY CRYSTALLOGRAPHY (3.05 ANGSTROMS) OF THE 30S SUBUNIT</scope>
</reference>
<reference key="15">
    <citation type="journal article" date="2005" name="Cell">
        <title>Crystal structures of the ribosome in complex with release factors RF1 and RF2 bound to a cognate stop codon.</title>
        <authorList>
            <person name="Petry S."/>
            <person name="Brodersen D.E."/>
            <person name="Murphy F.V."/>
            <person name="Dunham C.M."/>
            <person name="Selmer M."/>
            <person name="Tarry M.J."/>
            <person name="Kelley A.C."/>
            <person name="Ramakrishnan V."/>
        </authorList>
    </citation>
    <scope>X-RAY CRYSTALLOGRAPHY (5.90 ANGSTROMS) OF 70S RIBOSOME IN COMPLEX WITH RF1 OR RF2</scope>
    <scope>SUBUNIT</scope>
</reference>
<reference key="16">
    <citation type="journal article" date="2008" name="Science">
        <title>Insights into translational termination from the structure of RF2 bound to the ribosome.</title>
        <authorList>
            <person name="Weixlbaumer A."/>
            <person name="Jin H."/>
            <person name="Neubauer C."/>
            <person name="Voorhees R.M."/>
            <person name="Petry S."/>
            <person name="Kelley A.C."/>
            <person name="Ramakrishnan V."/>
        </authorList>
    </citation>
    <scope>X-RAY CRYSTALLOGRAPHY (3.45 ANGSTROMS) OF 70S RIBOSOME IN COMPLEX WITH RF2</scope>
    <scope>SUBUNIT</scope>
</reference>
<reference key="17">
    <citation type="journal article" date="2010" name="Proc. Natl. Acad. Sci. U.S.A.">
        <title>Structure of the 70S ribosome bound to release factor 2 and a substrate analog provides insights into catalysis of peptide release.</title>
        <authorList>
            <person name="Jin H."/>
            <person name="Kelley A.C."/>
            <person name="Loakes D."/>
            <person name="Ramakrishnan V."/>
        </authorList>
    </citation>
    <scope>X-RAY CRYSTALLOGRAPHY (3.10 ANGSTROMS) OF 70S RIBOSOME IN COMPLEX WITH RF2</scope>
    <scope>SUBUNIT</scope>
</reference>
<protein>
    <recommendedName>
        <fullName evidence="1">Small ribosomal subunit protein uS10</fullName>
    </recommendedName>
    <alternativeName>
        <fullName evidence="4">30S ribosomal protein S10</fullName>
    </alternativeName>
</protein>
<feature type="initiator methionine" description="Removed" evidence="3">
    <location>
        <position position="1"/>
    </location>
</feature>
<feature type="chain" id="PRO_0000146620" description="Small ribosomal subunit protein uS10">
    <location>
        <begin position="2"/>
        <end position="105"/>
    </location>
</feature>
<feature type="strand" evidence="6">
    <location>
        <begin position="6"/>
        <end position="11"/>
    </location>
</feature>
<feature type="turn" evidence="6">
    <location>
        <begin position="15"/>
        <end position="20"/>
    </location>
</feature>
<feature type="helix" evidence="6">
    <location>
        <begin position="22"/>
        <end position="25"/>
    </location>
</feature>
<feature type="turn" evidence="6">
    <location>
        <begin position="26"/>
        <end position="28"/>
    </location>
</feature>
<feature type="strand" evidence="6">
    <location>
        <begin position="29"/>
        <end position="31"/>
    </location>
</feature>
<feature type="strand" evidence="7">
    <location>
        <begin position="34"/>
        <end position="38"/>
    </location>
</feature>
<feature type="strand" evidence="9">
    <location>
        <begin position="39"/>
        <end position="43"/>
    </location>
</feature>
<feature type="strand" evidence="6">
    <location>
        <begin position="46"/>
        <end position="48"/>
    </location>
</feature>
<feature type="strand" evidence="6">
    <location>
        <begin position="51"/>
        <end position="55"/>
    </location>
</feature>
<feature type="helix" evidence="10">
    <location>
        <begin position="57"/>
        <end position="59"/>
    </location>
</feature>
<feature type="strand" evidence="6">
    <location>
        <begin position="62"/>
        <end position="64"/>
    </location>
</feature>
<feature type="strand" evidence="6">
    <location>
        <begin position="67"/>
        <end position="70"/>
    </location>
</feature>
<feature type="strand" evidence="6">
    <location>
        <begin position="74"/>
        <end position="76"/>
    </location>
</feature>
<feature type="turn" evidence="8">
    <location>
        <begin position="78"/>
        <end position="80"/>
    </location>
</feature>
<feature type="helix" evidence="6">
    <location>
        <begin position="81"/>
        <end position="84"/>
    </location>
</feature>
<feature type="strand" evidence="6">
    <location>
        <begin position="85"/>
        <end position="87"/>
    </location>
</feature>
<feature type="strand" evidence="5">
    <location>
        <begin position="92"/>
        <end position="94"/>
    </location>
</feature>
<feature type="strand" evidence="6">
    <location>
        <begin position="95"/>
        <end position="98"/>
    </location>
</feature>
<keyword id="KW-0002">3D-structure</keyword>
<keyword id="KW-0903">Direct protein sequencing</keyword>
<keyword id="KW-1185">Reference proteome</keyword>
<keyword id="KW-0687">Ribonucleoprotein</keyword>
<keyword id="KW-0689">Ribosomal protein</keyword>
<keyword id="KW-0694">RNA-binding</keyword>
<keyword id="KW-0699">rRNA-binding</keyword>
<name>RS10_THET8</name>
<organism>
    <name type="scientific">Thermus thermophilus (strain ATCC 27634 / DSM 579 / HB8)</name>
    <dbReference type="NCBI Taxonomy" id="300852"/>
    <lineage>
        <taxon>Bacteria</taxon>
        <taxon>Thermotogati</taxon>
        <taxon>Deinococcota</taxon>
        <taxon>Deinococci</taxon>
        <taxon>Thermales</taxon>
        <taxon>Thermaceae</taxon>
        <taxon>Thermus</taxon>
    </lineage>
</organism>
<dbReference type="EMBL" id="U36504">
    <property type="protein sequence ID" value="AAA97863.1"/>
    <property type="molecule type" value="Genomic_DNA"/>
</dbReference>
<dbReference type="EMBL" id="AP008226">
    <property type="protein sequence ID" value="BAD71516.1"/>
    <property type="molecule type" value="Genomic_DNA"/>
</dbReference>
<dbReference type="PIR" id="S10249">
    <property type="entry name" value="R3TW12"/>
</dbReference>
<dbReference type="RefSeq" id="WP_008633424.1">
    <property type="nucleotide sequence ID" value="NC_006461.1"/>
</dbReference>
<dbReference type="RefSeq" id="YP_144959.1">
    <property type="nucleotide sequence ID" value="NC_006461.1"/>
</dbReference>
<dbReference type="PDB" id="1FJG">
    <property type="method" value="X-ray"/>
    <property type="resolution" value="3.00 A"/>
    <property type="chains" value="J=1-105"/>
</dbReference>
<dbReference type="PDB" id="1HNW">
    <property type="method" value="X-ray"/>
    <property type="resolution" value="3.40 A"/>
    <property type="chains" value="J=1-105"/>
</dbReference>
<dbReference type="PDB" id="1HNX">
    <property type="method" value="X-ray"/>
    <property type="resolution" value="3.40 A"/>
    <property type="chains" value="J=1-105"/>
</dbReference>
<dbReference type="PDB" id="1HNZ">
    <property type="method" value="X-ray"/>
    <property type="resolution" value="3.30 A"/>
    <property type="chains" value="J=1-105"/>
</dbReference>
<dbReference type="PDB" id="1HR0">
    <property type="method" value="X-ray"/>
    <property type="resolution" value="3.20 A"/>
    <property type="chains" value="J=1-105"/>
</dbReference>
<dbReference type="PDB" id="1I94">
    <property type="method" value="X-ray"/>
    <property type="resolution" value="3.20 A"/>
    <property type="chains" value="J=2-105"/>
</dbReference>
<dbReference type="PDB" id="1I95">
    <property type="method" value="X-ray"/>
    <property type="resolution" value="4.50 A"/>
    <property type="chains" value="J=2-105"/>
</dbReference>
<dbReference type="PDB" id="1I96">
    <property type="method" value="X-ray"/>
    <property type="resolution" value="4.20 A"/>
    <property type="chains" value="J=2-105"/>
</dbReference>
<dbReference type="PDB" id="1I97">
    <property type="method" value="X-ray"/>
    <property type="resolution" value="4.50 A"/>
    <property type="chains" value="J=2-105"/>
</dbReference>
<dbReference type="PDB" id="1IBK">
    <property type="method" value="X-ray"/>
    <property type="resolution" value="3.31 A"/>
    <property type="chains" value="J=1-105"/>
</dbReference>
<dbReference type="PDB" id="1IBL">
    <property type="method" value="X-ray"/>
    <property type="resolution" value="3.11 A"/>
    <property type="chains" value="J=1-105"/>
</dbReference>
<dbReference type="PDB" id="1IBM">
    <property type="method" value="X-ray"/>
    <property type="resolution" value="3.31 A"/>
    <property type="chains" value="J=1-105"/>
</dbReference>
<dbReference type="PDB" id="1J5E">
    <property type="method" value="X-ray"/>
    <property type="resolution" value="3.05 A"/>
    <property type="chains" value="J=2-105"/>
</dbReference>
<dbReference type="PDB" id="1JGO">
    <property type="method" value="X-ray"/>
    <property type="resolution" value="5.60 A"/>
    <property type="chains" value="M=1-105"/>
</dbReference>
<dbReference type="PDB" id="1JGP">
    <property type="method" value="X-ray"/>
    <property type="resolution" value="7.00 A"/>
    <property type="chains" value="M=1-105"/>
</dbReference>
<dbReference type="PDB" id="1JGQ">
    <property type="method" value="X-ray"/>
    <property type="resolution" value="5.00 A"/>
    <property type="chains" value="M=1-105"/>
</dbReference>
<dbReference type="PDB" id="1ML5">
    <property type="method" value="EM"/>
    <property type="resolution" value="14.00 A"/>
    <property type="chains" value="M=1-105"/>
</dbReference>
<dbReference type="PDB" id="1N32">
    <property type="method" value="X-ray"/>
    <property type="resolution" value="3.00 A"/>
    <property type="chains" value="J=2-105"/>
</dbReference>
<dbReference type="PDB" id="1N33">
    <property type="method" value="X-ray"/>
    <property type="resolution" value="3.35 A"/>
    <property type="chains" value="J=2-105"/>
</dbReference>
<dbReference type="PDB" id="1N34">
    <property type="method" value="X-ray"/>
    <property type="resolution" value="3.80 A"/>
    <property type="chains" value="J=2-105"/>
</dbReference>
<dbReference type="PDB" id="1N36">
    <property type="method" value="X-ray"/>
    <property type="resolution" value="3.65 A"/>
    <property type="chains" value="J=2-105"/>
</dbReference>
<dbReference type="PDB" id="1VVJ">
    <property type="method" value="X-ray"/>
    <property type="resolution" value="3.44 A"/>
    <property type="chains" value="QJ/XJ=1-105"/>
</dbReference>
<dbReference type="PDB" id="1VY4">
    <property type="method" value="X-ray"/>
    <property type="resolution" value="2.60 A"/>
    <property type="chains" value="AJ/CJ=1-105"/>
</dbReference>
<dbReference type="PDB" id="1VY5">
    <property type="method" value="X-ray"/>
    <property type="resolution" value="2.55 A"/>
    <property type="chains" value="AJ/CJ=1-105"/>
</dbReference>
<dbReference type="PDB" id="1VY6">
    <property type="method" value="X-ray"/>
    <property type="resolution" value="2.90 A"/>
    <property type="chains" value="AJ/CJ=1-105"/>
</dbReference>
<dbReference type="PDB" id="1VY7">
    <property type="method" value="X-ray"/>
    <property type="resolution" value="2.80 A"/>
    <property type="chains" value="AJ/CJ=1-105"/>
</dbReference>
<dbReference type="PDB" id="1XMO">
    <property type="method" value="X-ray"/>
    <property type="resolution" value="3.25 A"/>
    <property type="chains" value="J=1-105"/>
</dbReference>
<dbReference type="PDB" id="1XMQ">
    <property type="method" value="X-ray"/>
    <property type="resolution" value="3.00 A"/>
    <property type="chains" value="J=1-105"/>
</dbReference>
<dbReference type="PDB" id="1XNQ">
    <property type="method" value="X-ray"/>
    <property type="resolution" value="3.05 A"/>
    <property type="chains" value="J=1-105"/>
</dbReference>
<dbReference type="PDB" id="1XNR">
    <property type="method" value="X-ray"/>
    <property type="resolution" value="3.10 A"/>
    <property type="chains" value="J=1-105"/>
</dbReference>
<dbReference type="PDB" id="2E5L">
    <property type="method" value="X-ray"/>
    <property type="resolution" value="3.30 A"/>
    <property type="chains" value="J=2-105"/>
</dbReference>
<dbReference type="PDB" id="2F4V">
    <property type="method" value="X-ray"/>
    <property type="resolution" value="3.80 A"/>
    <property type="chains" value="J=1-105"/>
</dbReference>
<dbReference type="PDB" id="2HHH">
    <property type="method" value="X-ray"/>
    <property type="resolution" value="3.35 A"/>
    <property type="chains" value="J=1-105"/>
</dbReference>
<dbReference type="PDB" id="2UU9">
    <property type="method" value="X-ray"/>
    <property type="resolution" value="3.10 A"/>
    <property type="chains" value="J=2-105"/>
</dbReference>
<dbReference type="PDB" id="2UUA">
    <property type="method" value="X-ray"/>
    <property type="resolution" value="2.90 A"/>
    <property type="chains" value="J=2-105"/>
</dbReference>
<dbReference type="PDB" id="2UUB">
    <property type="method" value="X-ray"/>
    <property type="resolution" value="2.80 A"/>
    <property type="chains" value="J=2-105"/>
</dbReference>
<dbReference type="PDB" id="2UUC">
    <property type="method" value="X-ray"/>
    <property type="resolution" value="3.10 A"/>
    <property type="chains" value="J=2-105"/>
</dbReference>
<dbReference type="PDB" id="2UXB">
    <property type="method" value="X-ray"/>
    <property type="resolution" value="3.10 A"/>
    <property type="chains" value="J=2-105"/>
</dbReference>
<dbReference type="PDB" id="2UXC">
    <property type="method" value="X-ray"/>
    <property type="resolution" value="2.90 A"/>
    <property type="chains" value="J=2-105"/>
</dbReference>
<dbReference type="PDB" id="2UXD">
    <property type="method" value="X-ray"/>
    <property type="resolution" value="3.20 A"/>
    <property type="chains" value="J=2-105"/>
</dbReference>
<dbReference type="PDB" id="2VQE">
    <property type="method" value="X-ray"/>
    <property type="resolution" value="2.50 A"/>
    <property type="chains" value="J=1-105"/>
</dbReference>
<dbReference type="PDB" id="2VQF">
    <property type="method" value="X-ray"/>
    <property type="resolution" value="2.90 A"/>
    <property type="chains" value="J=1-105"/>
</dbReference>
<dbReference type="PDB" id="2ZM6">
    <property type="method" value="X-ray"/>
    <property type="resolution" value="3.30 A"/>
    <property type="chains" value="J=2-105"/>
</dbReference>
<dbReference type="PDB" id="3OTO">
    <property type="method" value="X-ray"/>
    <property type="resolution" value="3.69 A"/>
    <property type="chains" value="J=1-105"/>
</dbReference>
<dbReference type="PDB" id="3T1H">
    <property type="method" value="X-ray"/>
    <property type="resolution" value="3.11 A"/>
    <property type="chains" value="J=1-105"/>
</dbReference>
<dbReference type="PDB" id="3T1Y">
    <property type="method" value="X-ray"/>
    <property type="resolution" value="2.80 A"/>
    <property type="chains" value="J=1-105"/>
</dbReference>
<dbReference type="PDB" id="4AQY">
    <property type="method" value="X-ray"/>
    <property type="resolution" value="3.50 A"/>
    <property type="chains" value="J=2-105"/>
</dbReference>
<dbReference type="PDB" id="4B3M">
    <property type="method" value="X-ray"/>
    <property type="resolution" value="2.90 A"/>
    <property type="chains" value="J=2-105"/>
</dbReference>
<dbReference type="PDB" id="4B3R">
    <property type="method" value="X-ray"/>
    <property type="resolution" value="3.00 A"/>
    <property type="chains" value="J=2-105"/>
</dbReference>
<dbReference type="PDB" id="4B3S">
    <property type="method" value="X-ray"/>
    <property type="resolution" value="3.15 A"/>
    <property type="chains" value="J=2-105"/>
</dbReference>
<dbReference type="PDB" id="4B3T">
    <property type="method" value="X-ray"/>
    <property type="resolution" value="3.00 A"/>
    <property type="chains" value="J=2-105"/>
</dbReference>
<dbReference type="PDB" id="4DR1">
    <property type="method" value="X-ray"/>
    <property type="resolution" value="3.60 A"/>
    <property type="chains" value="J=1-105"/>
</dbReference>
<dbReference type="PDB" id="4DR2">
    <property type="method" value="X-ray"/>
    <property type="resolution" value="3.25 A"/>
    <property type="chains" value="J=1-105"/>
</dbReference>
<dbReference type="PDB" id="4DR3">
    <property type="method" value="X-ray"/>
    <property type="resolution" value="3.35 A"/>
    <property type="chains" value="J=1-105"/>
</dbReference>
<dbReference type="PDB" id="4DR4">
    <property type="method" value="X-ray"/>
    <property type="resolution" value="3.97 A"/>
    <property type="chains" value="J=1-105"/>
</dbReference>
<dbReference type="PDB" id="4DR5">
    <property type="method" value="X-ray"/>
    <property type="resolution" value="3.45 A"/>
    <property type="chains" value="J=1-105"/>
</dbReference>
<dbReference type="PDB" id="4DR6">
    <property type="method" value="X-ray"/>
    <property type="resolution" value="3.30 A"/>
    <property type="chains" value="J=1-105"/>
</dbReference>
<dbReference type="PDB" id="4DR7">
    <property type="method" value="X-ray"/>
    <property type="resolution" value="3.75 A"/>
    <property type="chains" value="J=1-105"/>
</dbReference>
<dbReference type="PDB" id="4DUY">
    <property type="method" value="X-ray"/>
    <property type="resolution" value="3.39 A"/>
    <property type="chains" value="J=1-105"/>
</dbReference>
<dbReference type="PDB" id="4DUZ">
    <property type="method" value="X-ray"/>
    <property type="resolution" value="3.65 A"/>
    <property type="chains" value="J=1-105"/>
</dbReference>
<dbReference type="PDB" id="4DV0">
    <property type="method" value="X-ray"/>
    <property type="resolution" value="3.85 A"/>
    <property type="chains" value="J=1-105"/>
</dbReference>
<dbReference type="PDB" id="4DV1">
    <property type="method" value="X-ray"/>
    <property type="resolution" value="3.85 A"/>
    <property type="chains" value="J=1-105"/>
</dbReference>
<dbReference type="PDB" id="4DV2">
    <property type="method" value="X-ray"/>
    <property type="resolution" value="3.65 A"/>
    <property type="chains" value="J=1-105"/>
</dbReference>
<dbReference type="PDB" id="4DV3">
    <property type="method" value="X-ray"/>
    <property type="resolution" value="3.55 A"/>
    <property type="chains" value="J=1-105"/>
</dbReference>
<dbReference type="PDB" id="4DV4">
    <property type="method" value="X-ray"/>
    <property type="resolution" value="3.65 A"/>
    <property type="chains" value="J=1-105"/>
</dbReference>
<dbReference type="PDB" id="4DV5">
    <property type="method" value="X-ray"/>
    <property type="resolution" value="3.68 A"/>
    <property type="chains" value="J=1-105"/>
</dbReference>
<dbReference type="PDB" id="4DV6">
    <property type="method" value="X-ray"/>
    <property type="resolution" value="3.30 A"/>
    <property type="chains" value="J=1-105"/>
</dbReference>
<dbReference type="PDB" id="4DV7">
    <property type="method" value="X-ray"/>
    <property type="resolution" value="3.29 A"/>
    <property type="chains" value="J=1-105"/>
</dbReference>
<dbReference type="PDB" id="4GKJ">
    <property type="method" value="X-ray"/>
    <property type="resolution" value="3.30 A"/>
    <property type="chains" value="J=3-100"/>
</dbReference>
<dbReference type="PDB" id="4GKK">
    <property type="method" value="X-ray"/>
    <property type="resolution" value="3.20 A"/>
    <property type="chains" value="J=3-100"/>
</dbReference>
<dbReference type="PDB" id="4JI0">
    <property type="method" value="X-ray"/>
    <property type="resolution" value="3.49 A"/>
    <property type="chains" value="J=1-105"/>
</dbReference>
<dbReference type="PDB" id="4JI1">
    <property type="method" value="X-ray"/>
    <property type="resolution" value="3.14 A"/>
    <property type="chains" value="J=1-105"/>
</dbReference>
<dbReference type="PDB" id="4JI2">
    <property type="method" value="X-ray"/>
    <property type="resolution" value="3.64 A"/>
    <property type="chains" value="J=1-105"/>
</dbReference>
<dbReference type="PDB" id="4JI3">
    <property type="method" value="X-ray"/>
    <property type="resolution" value="3.35 A"/>
    <property type="chains" value="J=1-105"/>
</dbReference>
<dbReference type="PDB" id="4JI4">
    <property type="method" value="X-ray"/>
    <property type="resolution" value="3.69 A"/>
    <property type="chains" value="J=1-105"/>
</dbReference>
<dbReference type="PDB" id="4JI5">
    <property type="method" value="X-ray"/>
    <property type="resolution" value="3.85 A"/>
    <property type="chains" value="J=1-105"/>
</dbReference>
<dbReference type="PDB" id="4JI6">
    <property type="method" value="X-ray"/>
    <property type="resolution" value="3.55 A"/>
    <property type="chains" value="J=1-105"/>
</dbReference>
<dbReference type="PDB" id="4JI7">
    <property type="method" value="X-ray"/>
    <property type="resolution" value="3.50 A"/>
    <property type="chains" value="J=1-105"/>
</dbReference>
<dbReference type="PDB" id="4JI8">
    <property type="method" value="X-ray"/>
    <property type="resolution" value="3.74 A"/>
    <property type="chains" value="J=1-105"/>
</dbReference>
<dbReference type="PDB" id="4JV5">
    <property type="method" value="X-ray"/>
    <property type="resolution" value="3.16 A"/>
    <property type="chains" value="J=3-100"/>
</dbReference>
<dbReference type="PDB" id="4JYA">
    <property type="method" value="X-ray"/>
    <property type="resolution" value="3.10 A"/>
    <property type="chains" value="J=3-100"/>
</dbReference>
<dbReference type="PDB" id="4K0K">
    <property type="method" value="X-ray"/>
    <property type="resolution" value="3.40 A"/>
    <property type="chains" value="J=3-101"/>
</dbReference>
<dbReference type="PDB" id="4KHP">
    <property type="method" value="X-ray"/>
    <property type="resolution" value="3.10 A"/>
    <property type="chains" value="J=3-100"/>
</dbReference>
<dbReference type="PDB" id="4L47">
    <property type="method" value="X-ray"/>
    <property type="resolution" value="3.22 A"/>
    <property type="chains" value="QJ/XJ=1-105"/>
</dbReference>
<dbReference type="PDB" id="4L71">
    <property type="method" value="X-ray"/>
    <property type="resolution" value="3.90 A"/>
    <property type="chains" value="QJ/XJ=1-105"/>
</dbReference>
<dbReference type="PDB" id="4LEL">
    <property type="method" value="X-ray"/>
    <property type="resolution" value="3.90 A"/>
    <property type="chains" value="QJ/XJ=1-105"/>
</dbReference>
<dbReference type="PDB" id="4LF4">
    <property type="method" value="X-ray"/>
    <property type="resolution" value="3.34 A"/>
    <property type="chains" value="J=1-105"/>
</dbReference>
<dbReference type="PDB" id="4LF5">
    <property type="method" value="X-ray"/>
    <property type="resolution" value="3.75 A"/>
    <property type="chains" value="J=1-105"/>
</dbReference>
<dbReference type="PDB" id="4LF6">
    <property type="method" value="X-ray"/>
    <property type="resolution" value="3.31 A"/>
    <property type="chains" value="J=1-105"/>
</dbReference>
<dbReference type="PDB" id="4LF7">
    <property type="method" value="X-ray"/>
    <property type="resolution" value="3.15 A"/>
    <property type="chains" value="J=1-105"/>
</dbReference>
<dbReference type="PDB" id="4LF8">
    <property type="method" value="X-ray"/>
    <property type="resolution" value="3.15 A"/>
    <property type="chains" value="J=1-105"/>
</dbReference>
<dbReference type="PDB" id="4LF9">
    <property type="method" value="X-ray"/>
    <property type="resolution" value="3.28 A"/>
    <property type="chains" value="J=1-105"/>
</dbReference>
<dbReference type="PDB" id="4LFA">
    <property type="method" value="X-ray"/>
    <property type="resolution" value="3.65 A"/>
    <property type="chains" value="J=1-105"/>
</dbReference>
<dbReference type="PDB" id="4LFB">
    <property type="method" value="X-ray"/>
    <property type="resolution" value="3.01 A"/>
    <property type="chains" value="J=1-105"/>
</dbReference>
<dbReference type="PDB" id="4LFC">
    <property type="method" value="X-ray"/>
    <property type="resolution" value="3.60 A"/>
    <property type="chains" value="J=1-105"/>
</dbReference>
<dbReference type="PDB" id="4LFZ">
    <property type="method" value="X-ray"/>
    <property type="resolution" value="3.92 A"/>
    <property type="chains" value="QJ/XJ=1-105"/>
</dbReference>
<dbReference type="PDB" id="4LNT">
    <property type="method" value="X-ray"/>
    <property type="resolution" value="2.94 A"/>
    <property type="chains" value="QJ/XJ=1-105"/>
</dbReference>
<dbReference type="PDB" id="4LSK">
    <property type="method" value="X-ray"/>
    <property type="resolution" value="3.48 A"/>
    <property type="chains" value="QJ/XJ=1-105"/>
</dbReference>
<dbReference type="PDB" id="4LT8">
    <property type="method" value="X-ray"/>
    <property type="resolution" value="3.14 A"/>
    <property type="chains" value="QJ/XJ=1-105"/>
</dbReference>
<dbReference type="PDB" id="4NXM">
    <property type="method" value="X-ray"/>
    <property type="resolution" value="3.65 A"/>
    <property type="chains" value="J=1-105"/>
</dbReference>
<dbReference type="PDB" id="4NXN">
    <property type="method" value="X-ray"/>
    <property type="resolution" value="3.54 A"/>
    <property type="chains" value="J=1-105"/>
</dbReference>
<dbReference type="PDB" id="4OX9">
    <property type="method" value="X-ray"/>
    <property type="resolution" value="3.80 A"/>
    <property type="chains" value="J=2-105"/>
</dbReference>
<dbReference type="PDB" id="4P6F">
    <property type="method" value="X-ray"/>
    <property type="resolution" value="3.60 A"/>
    <property type="chains" value="QJ/XJ=1-105"/>
</dbReference>
<dbReference type="PDB" id="4P70">
    <property type="method" value="X-ray"/>
    <property type="resolution" value="3.68 A"/>
    <property type="chains" value="QJ/XJ=1-105"/>
</dbReference>
<dbReference type="PDB" id="4TUA">
    <property type="method" value="X-ray"/>
    <property type="resolution" value="3.60 A"/>
    <property type="chains" value="QJ/XJ=1-105"/>
</dbReference>
<dbReference type="PDB" id="4TUB">
    <property type="method" value="X-ray"/>
    <property type="resolution" value="3.60 A"/>
    <property type="chains" value="QJ/XJ=1-105"/>
</dbReference>
<dbReference type="PDB" id="4TUC">
    <property type="method" value="X-ray"/>
    <property type="resolution" value="3.60 A"/>
    <property type="chains" value="QJ/XJ=1-105"/>
</dbReference>
<dbReference type="PDB" id="4TUD">
    <property type="method" value="X-ray"/>
    <property type="resolution" value="3.60 A"/>
    <property type="chains" value="QJ/XJ=1-105"/>
</dbReference>
<dbReference type="PDB" id="4TUE">
    <property type="method" value="X-ray"/>
    <property type="resolution" value="3.50 A"/>
    <property type="chains" value="QJ/XJ=1-105"/>
</dbReference>
<dbReference type="PDB" id="4V42">
    <property type="method" value="X-ray"/>
    <property type="resolution" value="5.50 A"/>
    <property type="chains" value="AM=1-105"/>
</dbReference>
<dbReference type="PDB" id="4V49">
    <property type="method" value="X-ray"/>
    <property type="resolution" value="8.70 A"/>
    <property type="chains" value="J=3-100"/>
</dbReference>
<dbReference type="PDB" id="4V4A">
    <property type="method" value="X-ray"/>
    <property type="resolution" value="9.50 A"/>
    <property type="chains" value="J=3-100"/>
</dbReference>
<dbReference type="PDB" id="4V4I">
    <property type="method" value="X-ray"/>
    <property type="resolution" value="3.71 A"/>
    <property type="chains" value="k=-"/>
</dbReference>
<dbReference type="PDB" id="4V4P">
    <property type="method" value="X-ray"/>
    <property type="resolution" value="5.50 A"/>
    <property type="chains" value="BM=1-105"/>
</dbReference>
<dbReference type="PDB" id="4V4R">
    <property type="method" value="X-ray"/>
    <property type="resolution" value="5.90 A"/>
    <property type="chains" value="AJ=1-105"/>
</dbReference>
<dbReference type="PDB" id="4V4S">
    <property type="method" value="X-ray"/>
    <property type="resolution" value="6.76 A"/>
    <property type="chains" value="AJ=1-105"/>
</dbReference>
<dbReference type="PDB" id="4V4T">
    <property type="method" value="X-ray"/>
    <property type="resolution" value="6.46 A"/>
    <property type="chains" value="AJ=1-105"/>
</dbReference>
<dbReference type="PDB" id="4V4X">
    <property type="method" value="X-ray"/>
    <property type="resolution" value="5.00 A"/>
    <property type="chains" value="AM=1-105"/>
</dbReference>
<dbReference type="PDB" id="4V4Y">
    <property type="method" value="X-ray"/>
    <property type="resolution" value="5.50 A"/>
    <property type="chains" value="AM=1-105"/>
</dbReference>
<dbReference type="PDB" id="4V4Z">
    <property type="method" value="X-ray"/>
    <property type="resolution" value="4.51 A"/>
    <property type="chains" value="AM=1-105"/>
</dbReference>
<dbReference type="PDB" id="4V51">
    <property type="method" value="X-ray"/>
    <property type="resolution" value="2.80 A"/>
    <property type="chains" value="AJ/CJ=2-105"/>
</dbReference>
<dbReference type="PDB" id="4V5A">
    <property type="method" value="X-ray"/>
    <property type="resolution" value="3.50 A"/>
    <property type="chains" value="AJ/CJ=2-105"/>
</dbReference>
<dbReference type="PDB" id="4V5C">
    <property type="method" value="X-ray"/>
    <property type="resolution" value="3.30 A"/>
    <property type="chains" value="AJ/CJ=1-105"/>
</dbReference>
<dbReference type="PDB" id="4V5D">
    <property type="method" value="X-ray"/>
    <property type="resolution" value="3.50 A"/>
    <property type="chains" value="AJ/CJ=1-105"/>
</dbReference>
<dbReference type="PDB" id="4V5E">
    <property type="method" value="X-ray"/>
    <property type="resolution" value="3.45 A"/>
    <property type="chains" value="AJ/CJ=1-105"/>
</dbReference>
<dbReference type="PDB" id="4V5F">
    <property type="method" value="X-ray"/>
    <property type="resolution" value="3.60 A"/>
    <property type="chains" value="AJ/CJ=1-105"/>
</dbReference>
<dbReference type="PDB" id="4V5G">
    <property type="method" value="X-ray"/>
    <property type="resolution" value="3.60 A"/>
    <property type="chains" value="AJ/CJ=1-105"/>
</dbReference>
<dbReference type="PDB" id="4V5J">
    <property type="method" value="X-ray"/>
    <property type="resolution" value="3.10 A"/>
    <property type="chains" value="AJ/CJ=1-105"/>
</dbReference>
<dbReference type="PDB" id="4V5K">
    <property type="method" value="X-ray"/>
    <property type="resolution" value="3.20 A"/>
    <property type="chains" value="AJ/CJ=1-105"/>
</dbReference>
<dbReference type="PDB" id="4V5L">
    <property type="method" value="X-ray"/>
    <property type="resolution" value="3.10 A"/>
    <property type="chains" value="AJ=1-105"/>
</dbReference>
<dbReference type="PDB" id="4V5M">
    <property type="method" value="EM"/>
    <property type="resolution" value="7.80 A"/>
    <property type="chains" value="AJ=1-105"/>
</dbReference>
<dbReference type="PDB" id="4V5N">
    <property type="method" value="EM"/>
    <property type="resolution" value="7.60 A"/>
    <property type="chains" value="AJ=1-105"/>
</dbReference>
<dbReference type="PDB" id="4V5P">
    <property type="method" value="X-ray"/>
    <property type="resolution" value="3.10 A"/>
    <property type="chains" value="AJ/CJ=1-105"/>
</dbReference>
<dbReference type="PDB" id="4V5Q">
    <property type="method" value="X-ray"/>
    <property type="resolution" value="3.10 A"/>
    <property type="chains" value="AJ/CJ=1-105"/>
</dbReference>
<dbReference type="PDB" id="4V5R">
    <property type="method" value="X-ray"/>
    <property type="resolution" value="3.10 A"/>
    <property type="chains" value="AJ/CJ=1-105"/>
</dbReference>
<dbReference type="PDB" id="4V5S">
    <property type="method" value="X-ray"/>
    <property type="resolution" value="3.10 A"/>
    <property type="chains" value="AJ/CJ=1-105"/>
</dbReference>
<dbReference type="PDB" id="4V68">
    <property type="method" value="EM"/>
    <property type="resolution" value="6.40 A"/>
    <property type="chains" value="AJ=3-101"/>
</dbReference>
<dbReference type="PDB" id="4V6A">
    <property type="method" value="X-ray"/>
    <property type="resolution" value="3.10 A"/>
    <property type="chains" value="AJ/CJ=1-105"/>
</dbReference>
<dbReference type="PDB" id="4V6F">
    <property type="method" value="X-ray"/>
    <property type="resolution" value="3.10 A"/>
    <property type="chains" value="BM/CM=1-105"/>
</dbReference>
<dbReference type="PDB" id="4V6G">
    <property type="method" value="X-ray"/>
    <property type="resolution" value="3.50 A"/>
    <property type="chains" value="AM/CM=1-105"/>
</dbReference>
<dbReference type="PDB" id="4V7J">
    <property type="method" value="X-ray"/>
    <property type="resolution" value="3.30 A"/>
    <property type="chains" value="Aj/Bj=1-105"/>
</dbReference>
<dbReference type="PDB" id="4V7K">
    <property type="method" value="X-ray"/>
    <property type="resolution" value="3.60 A"/>
    <property type="chains" value="Aj/Bj=1-105"/>
</dbReference>
<dbReference type="PDB" id="4V7L">
    <property type="method" value="X-ray"/>
    <property type="resolution" value="3.00 A"/>
    <property type="chains" value="AJ/CJ=1-105"/>
</dbReference>
<dbReference type="PDB" id="4V7M">
    <property type="method" value="X-ray"/>
    <property type="resolution" value="3.45 A"/>
    <property type="chains" value="AJ/CJ=1-105"/>
</dbReference>
<dbReference type="PDB" id="4V7W">
    <property type="method" value="X-ray"/>
    <property type="resolution" value="3.00 A"/>
    <property type="chains" value="AJ/CJ=1-105"/>
</dbReference>
<dbReference type="PDB" id="4V7X">
    <property type="method" value="X-ray"/>
    <property type="resolution" value="3.00 A"/>
    <property type="chains" value="AJ/CJ=1-105"/>
</dbReference>
<dbReference type="PDB" id="4V7Y">
    <property type="method" value="X-ray"/>
    <property type="resolution" value="3.00 A"/>
    <property type="chains" value="AJ/CJ=1-105"/>
</dbReference>
<dbReference type="PDB" id="4V7Z">
    <property type="method" value="X-ray"/>
    <property type="resolution" value="3.10 A"/>
    <property type="chains" value="AJ/CJ=1-105"/>
</dbReference>
<dbReference type="PDB" id="4V87">
    <property type="method" value="X-ray"/>
    <property type="resolution" value="3.10 A"/>
    <property type="chains" value="BM/CM=1-105"/>
</dbReference>
<dbReference type="PDB" id="4V8A">
    <property type="method" value="X-ray"/>
    <property type="resolution" value="3.20 A"/>
    <property type="chains" value="CJ/DJ=1-105"/>
</dbReference>
<dbReference type="PDB" id="4V8B">
    <property type="method" value="X-ray"/>
    <property type="resolution" value="3.00 A"/>
    <property type="chains" value="AM/CM=1-105"/>
</dbReference>
<dbReference type="PDB" id="4V8C">
    <property type="method" value="X-ray"/>
    <property type="resolution" value="3.30 A"/>
    <property type="chains" value="CM/DM=1-105"/>
</dbReference>
<dbReference type="PDB" id="4V8D">
    <property type="method" value="X-ray"/>
    <property type="resolution" value="3.00 A"/>
    <property type="chains" value="AM/CM=1-105"/>
</dbReference>
<dbReference type="PDB" id="4V8E">
    <property type="method" value="X-ray"/>
    <property type="resolution" value="3.30 A"/>
    <property type="chains" value="BM/DM=1-105"/>
</dbReference>
<dbReference type="PDB" id="4V8F">
    <property type="method" value="X-ray"/>
    <property type="resolution" value="3.30 A"/>
    <property type="chains" value="BM/CM=1-105"/>
</dbReference>
<dbReference type="PDB" id="4V8G">
    <property type="method" value="X-ray"/>
    <property type="resolution" value="3.00 A"/>
    <property type="chains" value="AJ/CJ=1-105"/>
</dbReference>
<dbReference type="PDB" id="4V8H">
    <property type="method" value="X-ray"/>
    <property type="resolution" value="3.10 A"/>
    <property type="chains" value="AJ/CJ=1-105"/>
</dbReference>
<dbReference type="PDB" id="4V8I">
    <property type="method" value="X-ray"/>
    <property type="resolution" value="2.70 A"/>
    <property type="chains" value="AJ/CJ=1-105"/>
</dbReference>
<dbReference type="PDB" id="4V8J">
    <property type="method" value="X-ray"/>
    <property type="resolution" value="3.90 A"/>
    <property type="chains" value="AJ/CJ=1-105"/>
</dbReference>
<dbReference type="PDB" id="4V8N">
    <property type="method" value="X-ray"/>
    <property type="resolution" value="3.10 A"/>
    <property type="chains" value="AJ/CJ=1-105"/>
</dbReference>
<dbReference type="PDB" id="4V8O">
    <property type="method" value="X-ray"/>
    <property type="resolution" value="3.80 A"/>
    <property type="chains" value="AJ=1-105"/>
</dbReference>
<dbReference type="PDB" id="4V8Q">
    <property type="method" value="X-ray"/>
    <property type="resolution" value="3.10 A"/>
    <property type="chains" value="BJ=1-105"/>
</dbReference>
<dbReference type="PDB" id="4V8U">
    <property type="method" value="X-ray"/>
    <property type="resolution" value="3.70 A"/>
    <property type="chains" value="AJ/CJ=1-105"/>
</dbReference>
<dbReference type="PDB" id="4V8X">
    <property type="method" value="X-ray"/>
    <property type="resolution" value="3.35 A"/>
    <property type="chains" value="AJ/CJ=1-105"/>
</dbReference>
<dbReference type="PDB" id="4V90">
    <property type="method" value="X-ray"/>
    <property type="resolution" value="2.95 A"/>
    <property type="chains" value="AJ=1-105"/>
</dbReference>
<dbReference type="PDB" id="4V95">
    <property type="method" value="X-ray"/>
    <property type="resolution" value="3.20 A"/>
    <property type="chains" value="AJ/CJ=1-105"/>
</dbReference>
<dbReference type="PDB" id="4V97">
    <property type="method" value="X-ray"/>
    <property type="resolution" value="3.52 A"/>
    <property type="chains" value="AJ/CJ=1-105"/>
</dbReference>
<dbReference type="PDB" id="4V9A">
    <property type="method" value="X-ray"/>
    <property type="resolution" value="3.30 A"/>
    <property type="chains" value="AM/CM=1-105"/>
</dbReference>
<dbReference type="PDB" id="4V9B">
    <property type="method" value="X-ray"/>
    <property type="resolution" value="3.10 A"/>
    <property type="chains" value="AM/CM=1-105"/>
</dbReference>
<dbReference type="PDB" id="4V9H">
    <property type="method" value="X-ray"/>
    <property type="resolution" value="2.86 A"/>
    <property type="chains" value="AJ=3-100"/>
</dbReference>
<dbReference type="PDB" id="4V9I">
    <property type="method" value="X-ray"/>
    <property type="resolution" value="3.30 A"/>
    <property type="chains" value="AJ/CJ=3-100"/>
</dbReference>
<dbReference type="PDB" id="4V9R">
    <property type="method" value="X-ray"/>
    <property type="resolution" value="3.00 A"/>
    <property type="chains" value="AJ/CJ=1-105"/>
</dbReference>
<dbReference type="PDB" id="4V9S">
    <property type="method" value="X-ray"/>
    <property type="resolution" value="3.10 A"/>
    <property type="chains" value="AJ/CJ=1-105"/>
</dbReference>
<dbReference type="PDB" id="4W2E">
    <property type="method" value="X-ray"/>
    <property type="resolution" value="2.90 A"/>
    <property type="chains" value="j=1-105"/>
</dbReference>
<dbReference type="PDB" id="4W2F">
    <property type="method" value="X-ray"/>
    <property type="resolution" value="2.40 A"/>
    <property type="chains" value="AJ/CJ=1-105"/>
</dbReference>
<dbReference type="PDB" id="4W2G">
    <property type="method" value="X-ray"/>
    <property type="resolution" value="2.55 A"/>
    <property type="chains" value="AJ/CJ=1-105"/>
</dbReference>
<dbReference type="PDB" id="4W2H">
    <property type="method" value="X-ray"/>
    <property type="resolution" value="2.70 A"/>
    <property type="chains" value="AJ/CJ=1-105"/>
</dbReference>
<dbReference type="PDB" id="4W2I">
    <property type="method" value="X-ray"/>
    <property type="resolution" value="2.70 A"/>
    <property type="chains" value="AJ/CJ=1-105"/>
</dbReference>
<dbReference type="PDB" id="4W4G">
    <property type="method" value="X-ray"/>
    <property type="resolution" value="3.30 A"/>
    <property type="chains" value="QJ/XJ=1-105"/>
</dbReference>
<dbReference type="PDB" id="4WPO">
    <property type="method" value="X-ray"/>
    <property type="resolution" value="2.80 A"/>
    <property type="chains" value="BJ/DJ=1-105"/>
</dbReference>
<dbReference type="PDB" id="4WQ1">
    <property type="method" value="X-ray"/>
    <property type="resolution" value="3.10 A"/>
    <property type="chains" value="1A/1I=1-105"/>
</dbReference>
<dbReference type="PDB" id="4WQF">
    <property type="method" value="X-ray"/>
    <property type="resolution" value="2.80 A"/>
    <property type="chains" value="BJ/DJ=1-105"/>
</dbReference>
<dbReference type="PDB" id="4WQR">
    <property type="method" value="X-ray"/>
    <property type="resolution" value="3.15 A"/>
    <property type="chains" value="1A/1I=1-105"/>
</dbReference>
<dbReference type="PDB" id="4WQU">
    <property type="method" value="X-ray"/>
    <property type="resolution" value="2.80 A"/>
    <property type="chains" value="BJ/DJ=1-105"/>
</dbReference>
<dbReference type="PDB" id="4WQY">
    <property type="method" value="X-ray"/>
    <property type="resolution" value="2.80 A"/>
    <property type="chains" value="BJ/DJ=1-105"/>
</dbReference>
<dbReference type="PDB" id="4WR6">
    <property type="method" value="X-ray"/>
    <property type="resolution" value="3.05 A"/>
    <property type="chains" value="1A/1I=1-105"/>
</dbReference>
<dbReference type="PDB" id="4WRA">
    <property type="method" value="X-ray"/>
    <property type="resolution" value="3.05 A"/>
    <property type="chains" value="1A/1I=1-105"/>
</dbReference>
<dbReference type="PDB" id="4WRO">
    <property type="method" value="X-ray"/>
    <property type="resolution" value="3.05 A"/>
    <property type="chains" value="1I=1-105"/>
</dbReference>
<dbReference type="PDB" id="4WSD">
    <property type="method" value="X-ray"/>
    <property type="resolution" value="2.95 A"/>
    <property type="chains" value="1A/1I=1-105"/>
</dbReference>
<dbReference type="PDB" id="4WSM">
    <property type="method" value="X-ray"/>
    <property type="resolution" value="3.30 A"/>
    <property type="chains" value="1A/1I=1-105"/>
</dbReference>
<dbReference type="PDB" id="4WT1">
    <property type="method" value="X-ray"/>
    <property type="resolution" value="3.05 A"/>
    <property type="chains" value="1A/1I=1-105"/>
</dbReference>
<dbReference type="PDB" id="4WT8">
    <property type="method" value="X-ray"/>
    <property type="resolution" value="3.40 A"/>
    <property type="chains" value="AJ/BJ=3-100"/>
</dbReference>
<dbReference type="PDB" id="4WU1">
    <property type="method" value="X-ray"/>
    <property type="resolution" value="3.20 A"/>
    <property type="chains" value="1A/1I=1-105"/>
</dbReference>
<dbReference type="PDB" id="4WZD">
    <property type="method" value="X-ray"/>
    <property type="resolution" value="3.10 A"/>
    <property type="chains" value="1A/1I=1-105"/>
</dbReference>
<dbReference type="PDB" id="4WZO">
    <property type="method" value="X-ray"/>
    <property type="resolution" value="3.30 A"/>
    <property type="chains" value="1A/1I=1-105"/>
</dbReference>
<dbReference type="PDB" id="4X62">
    <property type="method" value="X-ray"/>
    <property type="resolution" value="3.45 A"/>
    <property type="chains" value="J=3-101"/>
</dbReference>
<dbReference type="PDB" id="4X64">
    <property type="method" value="X-ray"/>
    <property type="resolution" value="3.35 A"/>
    <property type="chains" value="J=3-101"/>
</dbReference>
<dbReference type="PDB" id="4X65">
    <property type="method" value="X-ray"/>
    <property type="resolution" value="3.35 A"/>
    <property type="chains" value="J=3-101"/>
</dbReference>
<dbReference type="PDB" id="4X66">
    <property type="method" value="X-ray"/>
    <property type="resolution" value="3.45 A"/>
    <property type="chains" value="J=3-101"/>
</dbReference>
<dbReference type="PDB" id="4Y4O">
    <property type="method" value="X-ray"/>
    <property type="resolution" value="2.30 A"/>
    <property type="chains" value="1j/2j=1-105"/>
</dbReference>
<dbReference type="PDB" id="4Y4P">
    <property type="method" value="X-ray"/>
    <property type="resolution" value="2.50 A"/>
    <property type="chains" value="1j/2j=1-105"/>
</dbReference>
<dbReference type="PDB" id="4YHH">
    <property type="method" value="X-ray"/>
    <property type="resolution" value="3.42 A"/>
    <property type="chains" value="J=3-101"/>
</dbReference>
<dbReference type="PDB" id="4YPB">
    <property type="method" value="X-ray"/>
    <property type="resolution" value="3.40 A"/>
    <property type="chains" value="QJ/XJ=1-105"/>
</dbReference>
<dbReference type="PDB" id="4YY3">
    <property type="method" value="X-ray"/>
    <property type="resolution" value="3.60 A"/>
    <property type="chains" value="J=1-105"/>
</dbReference>
<dbReference type="PDB" id="4YZV">
    <property type="method" value="X-ray"/>
    <property type="resolution" value="3.10 A"/>
    <property type="chains" value="QJ/XJ=1-105"/>
</dbReference>
<dbReference type="PDB" id="4Z3S">
    <property type="method" value="X-ray"/>
    <property type="resolution" value="2.65 A"/>
    <property type="chains" value="1j/2j=1-105"/>
</dbReference>
<dbReference type="PDB" id="4Z8C">
    <property type="method" value="X-ray"/>
    <property type="resolution" value="2.90 A"/>
    <property type="chains" value="1j/2j=1-105"/>
</dbReference>
<dbReference type="PDB" id="4ZER">
    <property type="method" value="X-ray"/>
    <property type="resolution" value="3.10 A"/>
    <property type="chains" value="1j/2j=4-100"/>
</dbReference>
<dbReference type="PDB" id="4ZSN">
    <property type="method" value="X-ray"/>
    <property type="resolution" value="3.60 A"/>
    <property type="chains" value="QJ/XJ=1-105"/>
</dbReference>
<dbReference type="PDB" id="5A9Z">
    <property type="method" value="EM"/>
    <property type="resolution" value="4.70 A"/>
    <property type="chains" value="BN=3-100"/>
</dbReference>
<dbReference type="PDB" id="5AA0">
    <property type="method" value="EM"/>
    <property type="resolution" value="5.00 A"/>
    <property type="chains" value="BN=3-100"/>
</dbReference>
<dbReference type="PDB" id="5BR8">
    <property type="method" value="X-ray"/>
    <property type="resolution" value="3.40 A"/>
    <property type="chains" value="J=1-105"/>
</dbReference>
<dbReference type="PDB" id="5CZP">
    <property type="method" value="X-ray"/>
    <property type="resolution" value="3.30 A"/>
    <property type="chains" value="QJ/XJ=1-105"/>
</dbReference>
<dbReference type="PDB" id="5D8B">
    <property type="method" value="X-ray"/>
    <property type="resolution" value="3.63 A"/>
    <property type="chains" value="GC/KA=1-105"/>
</dbReference>
<dbReference type="PDB" id="5DFE">
    <property type="method" value="X-ray"/>
    <property type="resolution" value="3.10 A"/>
    <property type="chains" value="QJ/XJ=1-105"/>
</dbReference>
<dbReference type="PDB" id="5DOX">
    <property type="method" value="X-ray"/>
    <property type="resolution" value="3.10 A"/>
    <property type="chains" value="1j/2j=1-105"/>
</dbReference>
<dbReference type="PDB" id="5DOY">
    <property type="method" value="X-ray"/>
    <property type="resolution" value="2.60 A"/>
    <property type="chains" value="1j/2j=1-105"/>
</dbReference>
<dbReference type="PDB" id="5E7K">
    <property type="method" value="X-ray"/>
    <property type="resolution" value="3.20 A"/>
    <property type="chains" value="1A/1I=1-105"/>
</dbReference>
<dbReference type="PDB" id="5E81">
    <property type="method" value="X-ray"/>
    <property type="resolution" value="2.95 A"/>
    <property type="chains" value="1A/1I=1-105"/>
</dbReference>
<dbReference type="PDB" id="5EL4">
    <property type="method" value="X-ray"/>
    <property type="resolution" value="3.15 A"/>
    <property type="chains" value="1A/1I=1-105"/>
</dbReference>
<dbReference type="PDB" id="5EL5">
    <property type="method" value="X-ray"/>
    <property type="resolution" value="3.15 A"/>
    <property type="chains" value="1A/1I=1-105"/>
</dbReference>
<dbReference type="PDB" id="5EL6">
    <property type="method" value="X-ray"/>
    <property type="resolution" value="3.10 A"/>
    <property type="chains" value="1A/1I=1-105"/>
</dbReference>
<dbReference type="PDB" id="5EL7">
    <property type="method" value="X-ray"/>
    <property type="resolution" value="3.15 A"/>
    <property type="chains" value="1A/1I=1-105"/>
</dbReference>
<dbReference type="PDB" id="5F8K">
    <property type="method" value="X-ray"/>
    <property type="resolution" value="2.80 A"/>
    <property type="chains" value="1j/2j=4-100"/>
</dbReference>
<dbReference type="PDB" id="5FDU">
    <property type="method" value="X-ray"/>
    <property type="resolution" value="2.90 A"/>
    <property type="chains" value="1j/2j=4-100"/>
</dbReference>
<dbReference type="PDB" id="5FDV">
    <property type="method" value="X-ray"/>
    <property type="resolution" value="2.80 A"/>
    <property type="chains" value="1j/2j=4-100"/>
</dbReference>
<dbReference type="PDB" id="5HAU">
    <property type="method" value="X-ray"/>
    <property type="resolution" value="3.00 A"/>
    <property type="chains" value="1j/2j=1-105"/>
</dbReference>
<dbReference type="PDB" id="5HCP">
    <property type="method" value="X-ray"/>
    <property type="resolution" value="2.89 A"/>
    <property type="chains" value="1j/2j=1-105"/>
</dbReference>
<dbReference type="PDB" id="5HCQ">
    <property type="method" value="X-ray"/>
    <property type="resolution" value="2.80 A"/>
    <property type="chains" value="1j/2j=1-105"/>
</dbReference>
<dbReference type="PDB" id="5HCR">
    <property type="method" value="X-ray"/>
    <property type="resolution" value="2.80 A"/>
    <property type="chains" value="1j/2j=1-105"/>
</dbReference>
<dbReference type="PDB" id="5HD1">
    <property type="method" value="X-ray"/>
    <property type="resolution" value="2.70 A"/>
    <property type="chains" value="1j/2j=1-105"/>
</dbReference>
<dbReference type="PDB" id="5IB7">
    <property type="method" value="X-ray"/>
    <property type="resolution" value="2.99 A"/>
    <property type="chains" value="1A/1I=1-105"/>
</dbReference>
<dbReference type="PDB" id="5IB8">
    <property type="method" value="X-ray"/>
    <property type="resolution" value="3.13 A"/>
    <property type="chains" value="1A/1I=1-105"/>
</dbReference>
<dbReference type="PDB" id="5IBB">
    <property type="method" value="X-ray"/>
    <property type="resolution" value="2.96 A"/>
    <property type="chains" value="1A/1I=1-105"/>
</dbReference>
<dbReference type="PDB" id="5IMQ">
    <property type="method" value="EM"/>
    <property type="resolution" value="3.80 A"/>
    <property type="chains" value="N=1-105"/>
</dbReference>
<dbReference type="PDB" id="5IMR">
    <property type="method" value="EM"/>
    <property type="chains" value="N=1-105"/>
</dbReference>
<dbReference type="PDB" id="5IWA">
    <property type="method" value="X-ray"/>
    <property type="resolution" value="3.50 A"/>
    <property type="chains" value="J=3-101"/>
</dbReference>
<dbReference type="PDB" id="5J30">
    <property type="method" value="X-ray"/>
    <property type="resolution" value="3.20 A"/>
    <property type="chains" value="QJ/XJ=1-105"/>
</dbReference>
<dbReference type="PDB" id="5J3C">
    <property type="method" value="X-ray"/>
    <property type="resolution" value="3.04 A"/>
    <property type="chains" value="QJ/XJ=1-105"/>
</dbReference>
<dbReference type="PDB" id="5J4B">
    <property type="method" value="X-ray"/>
    <property type="resolution" value="2.60 A"/>
    <property type="chains" value="1j/2j=1-105"/>
</dbReference>
<dbReference type="PDB" id="5J4C">
    <property type="method" value="X-ray"/>
    <property type="resolution" value="2.80 A"/>
    <property type="chains" value="1j/2j=1-105"/>
</dbReference>
<dbReference type="PDB" id="5J8B">
    <property type="method" value="X-ray"/>
    <property type="resolution" value="2.60 A"/>
    <property type="chains" value="j=1-105"/>
</dbReference>
<dbReference type="PDB" id="5LMN">
    <property type="method" value="EM"/>
    <property type="resolution" value="3.55 A"/>
    <property type="chains" value="J=1-105"/>
</dbReference>
<dbReference type="PDB" id="5LMO">
    <property type="method" value="EM"/>
    <property type="resolution" value="4.30 A"/>
    <property type="chains" value="J=1-105"/>
</dbReference>
<dbReference type="PDB" id="5LMP">
    <property type="method" value="EM"/>
    <property type="resolution" value="5.35 A"/>
    <property type="chains" value="J=1-105"/>
</dbReference>
<dbReference type="PDB" id="5LMQ">
    <property type="method" value="EM"/>
    <property type="resolution" value="4.20 A"/>
    <property type="chains" value="J=1-105"/>
</dbReference>
<dbReference type="PDB" id="5LMR">
    <property type="method" value="EM"/>
    <property type="resolution" value="4.45 A"/>
    <property type="chains" value="J=1-105"/>
</dbReference>
<dbReference type="PDB" id="5LMS">
    <property type="method" value="EM"/>
    <property type="resolution" value="5.10 A"/>
    <property type="chains" value="J=1-105"/>
</dbReference>
<dbReference type="PDB" id="5LMT">
    <property type="method" value="EM"/>
    <property type="resolution" value="4.15 A"/>
    <property type="chains" value="J=1-105"/>
</dbReference>
<dbReference type="PDB" id="5LMU">
    <property type="method" value="EM"/>
    <property type="resolution" value="4.00 A"/>
    <property type="chains" value="J=1-105"/>
</dbReference>
<dbReference type="PDB" id="5LMV">
    <property type="method" value="EM"/>
    <property type="resolution" value="4.90 A"/>
    <property type="chains" value="J=1-105"/>
</dbReference>
<dbReference type="PDB" id="5NDJ">
    <property type="method" value="X-ray"/>
    <property type="resolution" value="3.15 A"/>
    <property type="chains" value="1A/1I=1-105"/>
</dbReference>
<dbReference type="PDB" id="5NDK">
    <property type="method" value="X-ray"/>
    <property type="resolution" value="2.95 A"/>
    <property type="chains" value="1A/1I=1-105"/>
</dbReference>
<dbReference type="PDB" id="5OT7">
    <property type="method" value="EM"/>
    <property type="resolution" value="3.80 A"/>
    <property type="chains" value="I=3-101"/>
</dbReference>
<dbReference type="PDB" id="5UQ7">
    <property type="method" value="EM"/>
    <property type="resolution" value="3.50 A"/>
    <property type="chains" value="j=5-100"/>
</dbReference>
<dbReference type="PDB" id="5UQ8">
    <property type="method" value="EM"/>
    <property type="resolution" value="3.20 A"/>
    <property type="chains" value="j=5-100"/>
</dbReference>
<dbReference type="PDB" id="5VP2">
    <property type="method" value="X-ray"/>
    <property type="resolution" value="2.80 A"/>
    <property type="chains" value="1j/2j=1-105"/>
</dbReference>
<dbReference type="PDB" id="5VPO">
    <property type="method" value="X-ray"/>
    <property type="resolution" value="3.34 A"/>
    <property type="chains" value="QJ/XJ=1-105"/>
</dbReference>
<dbReference type="PDB" id="5VPP">
    <property type="method" value="X-ray"/>
    <property type="resolution" value="3.90 A"/>
    <property type="chains" value="QJ/XJ=1-105"/>
</dbReference>
<dbReference type="PDB" id="5W4K">
    <property type="method" value="X-ray"/>
    <property type="resolution" value="2.70 A"/>
    <property type="chains" value="1j/2j=1-105"/>
</dbReference>
<dbReference type="PDB" id="5WIS">
    <property type="method" value="X-ray"/>
    <property type="resolution" value="2.70 A"/>
    <property type="chains" value="1j/2j=1-105"/>
</dbReference>
<dbReference type="PDB" id="5WIT">
    <property type="method" value="X-ray"/>
    <property type="resolution" value="2.60 A"/>
    <property type="chains" value="1j/2j=1-105"/>
</dbReference>
<dbReference type="PDB" id="5WNP">
    <property type="method" value="X-ray"/>
    <property type="resolution" value="3.30 A"/>
    <property type="chains" value="J=3-101"/>
</dbReference>
<dbReference type="PDB" id="5WNQ">
    <property type="method" value="X-ray"/>
    <property type="resolution" value="3.50 A"/>
    <property type="chains" value="J=3-100"/>
</dbReference>
<dbReference type="PDB" id="5WNR">
    <property type="method" value="X-ray"/>
    <property type="resolution" value="3.50 A"/>
    <property type="chains" value="J=3-100"/>
</dbReference>
<dbReference type="PDB" id="5WNS">
    <property type="method" value="X-ray"/>
    <property type="resolution" value="3.50 A"/>
    <property type="chains" value="J=3-100"/>
</dbReference>
<dbReference type="PDB" id="5WNT">
    <property type="method" value="X-ray"/>
    <property type="resolution" value="3.30 A"/>
    <property type="chains" value="J=3-101"/>
</dbReference>
<dbReference type="PDB" id="5WNU">
    <property type="method" value="X-ray"/>
    <property type="resolution" value="3.40 A"/>
    <property type="chains" value="J=3-101"/>
</dbReference>
<dbReference type="PDB" id="5WNV">
    <property type="method" value="X-ray"/>
    <property type="resolution" value="3.30 A"/>
    <property type="chains" value="J=3-101"/>
</dbReference>
<dbReference type="PDB" id="5ZLU">
    <property type="method" value="EM"/>
    <property type="resolution" value="3.60 A"/>
    <property type="chains" value="E=1-105"/>
</dbReference>
<dbReference type="PDB" id="6BUW">
    <property type="method" value="X-ray"/>
    <property type="resolution" value="3.50 A"/>
    <property type="chains" value="QJ/XJ=1-105"/>
</dbReference>
<dbReference type="PDB" id="6BZ6">
    <property type="method" value="X-ray"/>
    <property type="resolution" value="3.18 A"/>
    <property type="chains" value="QJ/XJ=1-105"/>
</dbReference>
<dbReference type="PDB" id="6BZ7">
    <property type="method" value="X-ray"/>
    <property type="resolution" value="3.68 A"/>
    <property type="chains" value="QJ/XJ=1-105"/>
</dbReference>
<dbReference type="PDB" id="6BZ8">
    <property type="method" value="X-ray"/>
    <property type="resolution" value="3.74 A"/>
    <property type="chains" value="QJ/XJ=1-105"/>
</dbReference>
<dbReference type="PDB" id="6C5L">
    <property type="method" value="X-ray"/>
    <property type="resolution" value="3.20 A"/>
    <property type="chains" value="AJ/CJ=1-105"/>
</dbReference>
<dbReference type="PDB" id="6CAE">
    <property type="method" value="X-ray"/>
    <property type="resolution" value="2.60 A"/>
    <property type="chains" value="1j/2j=1-105"/>
</dbReference>
<dbReference type="PDB" id="6CAO">
    <property type="method" value="X-ray"/>
    <property type="resolution" value="3.45 A"/>
    <property type="chains" value="J=3-101"/>
</dbReference>
<dbReference type="PDB" id="6CAP">
    <property type="method" value="X-ray"/>
    <property type="resolution" value="3.40 A"/>
    <property type="chains" value="J=3-100"/>
</dbReference>
<dbReference type="PDB" id="6CAQ">
    <property type="method" value="X-ray"/>
    <property type="resolution" value="3.40 A"/>
    <property type="chains" value="J=3-100"/>
</dbReference>
<dbReference type="PDB" id="6CAR">
    <property type="method" value="X-ray"/>
    <property type="resolution" value="3.40 A"/>
    <property type="chains" value="J=2-105"/>
</dbReference>
<dbReference type="PDB" id="6CAS">
    <property type="method" value="X-ray"/>
    <property type="resolution" value="3.50 A"/>
    <property type="chains" value="J=2-105"/>
</dbReference>
<dbReference type="PDB" id="6CFJ">
    <property type="method" value="X-ray"/>
    <property type="resolution" value="2.80 A"/>
    <property type="chains" value="1j/2j=1-105"/>
</dbReference>
<dbReference type="PDB" id="6CFK">
    <property type="method" value="X-ray"/>
    <property type="resolution" value="2.70 A"/>
    <property type="chains" value="1j/2j=1-105"/>
</dbReference>
<dbReference type="PDB" id="6CFL">
    <property type="method" value="X-ray"/>
    <property type="resolution" value="2.60 A"/>
    <property type="chains" value="1j/2j=1-105"/>
</dbReference>
<dbReference type="PDB" id="6CZR">
    <property type="method" value="X-ray"/>
    <property type="resolution" value="3.14 A"/>
    <property type="chains" value="1j/2j=4-100"/>
</dbReference>
<dbReference type="PDB" id="6DTI">
    <property type="method" value="X-ray"/>
    <property type="resolution" value="3.54 A"/>
    <property type="chains" value="J=1-105"/>
</dbReference>
<dbReference type="PDB" id="6FKR">
    <property type="method" value="X-ray"/>
    <property type="resolution" value="3.20 A"/>
    <property type="chains" value="1j/2j=4-100"/>
</dbReference>
<dbReference type="PDB" id="6GSJ">
    <property type="method" value="X-ray"/>
    <property type="resolution" value="2.96 A"/>
    <property type="chains" value="1A/1I=1-105"/>
</dbReference>
<dbReference type="PDB" id="6GSK">
    <property type="method" value="X-ray"/>
    <property type="resolution" value="3.36 A"/>
    <property type="chains" value="1A/1I=1-105"/>
</dbReference>
<dbReference type="PDB" id="6GSL">
    <property type="method" value="X-ray"/>
    <property type="resolution" value="3.16 A"/>
    <property type="chains" value="1A/1I=1-105"/>
</dbReference>
<dbReference type="PDB" id="6GZQ">
    <property type="method" value="EM"/>
    <property type="resolution" value="3.28 A"/>
    <property type="chains" value="J2=3-101"/>
</dbReference>
<dbReference type="PDB" id="6GZX">
    <property type="method" value="EM"/>
    <property type="resolution" value="4.57 A"/>
    <property type="chains" value="J3/J4=3-101"/>
</dbReference>
<dbReference type="PDB" id="6GZZ">
    <property type="method" value="EM"/>
    <property type="resolution" value="4.13 A"/>
    <property type="chains" value="J3/J4=3-101"/>
</dbReference>
<dbReference type="PDB" id="6MKN">
    <property type="method" value="X-ray"/>
    <property type="resolution" value="3.46 A"/>
    <property type="chains" value="J=1-105"/>
</dbReference>
<dbReference type="PDB" id="6MPF">
    <property type="method" value="X-ray"/>
    <property type="resolution" value="3.33 A"/>
    <property type="chains" value="J=3-100"/>
</dbReference>
<dbReference type="PDB" id="6MPI">
    <property type="method" value="X-ray"/>
    <property type="resolution" value="3.33 A"/>
    <property type="chains" value="J=1-105"/>
</dbReference>
<dbReference type="PDB" id="6N9E">
    <property type="method" value="X-ray"/>
    <property type="resolution" value="3.70 A"/>
    <property type="chains" value="1j/2j=1-105"/>
</dbReference>
<dbReference type="PDB" id="6N9F">
    <property type="method" value="X-ray"/>
    <property type="resolution" value="3.70 A"/>
    <property type="chains" value="1j/2j=1-105"/>
</dbReference>
<dbReference type="PDB" id="6ND5">
    <property type="method" value="X-ray"/>
    <property type="resolution" value="2.60 A"/>
    <property type="chains" value="1j/2j=1-105"/>
</dbReference>
<dbReference type="PDB" id="6ND6">
    <property type="method" value="X-ray"/>
    <property type="resolution" value="2.85 A"/>
    <property type="chains" value="1j/2j=1-105"/>
</dbReference>
<dbReference type="PDB" id="6NDK">
    <property type="method" value="X-ray"/>
    <property type="resolution" value="3.64 A"/>
    <property type="chains" value="QJ/XJ=1-105"/>
</dbReference>
<dbReference type="PDB" id="6NSH">
    <property type="method" value="X-ray"/>
    <property type="resolution" value="3.40 A"/>
    <property type="chains" value="QJ/XJ=1-105"/>
</dbReference>
<dbReference type="PDB" id="6NTA">
    <property type="method" value="X-ray"/>
    <property type="resolution" value="3.10 A"/>
    <property type="chains" value="QJ/XJ=1-105"/>
</dbReference>
<dbReference type="PDB" id="6NUO">
    <property type="method" value="X-ray"/>
    <property type="resolution" value="3.20 A"/>
    <property type="chains" value="QJ/XJ=1-105"/>
</dbReference>
<dbReference type="PDB" id="6NWY">
    <property type="method" value="X-ray"/>
    <property type="resolution" value="3.50 A"/>
    <property type="chains" value="QJ/XJ=1-105"/>
</dbReference>
<dbReference type="PDB" id="6NY6">
    <property type="method" value="X-ray"/>
    <property type="resolution" value="3.74 A"/>
    <property type="chains" value="J=1-105"/>
</dbReference>
<dbReference type="PDB" id="6O3M">
    <property type="method" value="X-ray"/>
    <property type="resolution" value="3.97 A"/>
    <property type="chains" value="QJ/XJ=1-105"/>
</dbReference>
<dbReference type="PDB" id="6O97">
    <property type="method" value="X-ray"/>
    <property type="resolution" value="2.75 A"/>
    <property type="chains" value="1j/2j=1-105"/>
</dbReference>
<dbReference type="PDB" id="6OF1">
    <property type="method" value="X-ray"/>
    <property type="resolution" value="2.80 A"/>
    <property type="chains" value="1j/2j=1-105"/>
</dbReference>
<dbReference type="PDB" id="6OF6">
    <property type="method" value="X-ray"/>
    <property type="resolution" value="3.20 A"/>
    <property type="chains" value="QJ/XJ=1-105"/>
</dbReference>
<dbReference type="PDB" id="6OJ2">
    <property type="method" value="X-ray"/>
    <property type="resolution" value="3.20 A"/>
    <property type="chains" value="QJ/XJ=1-105"/>
</dbReference>
<dbReference type="PDB" id="6OPE">
    <property type="method" value="X-ray"/>
    <property type="resolution" value="3.10 A"/>
    <property type="chains" value="QJ/XJ=1-105"/>
</dbReference>
<dbReference type="PDB" id="6ORD">
    <property type="method" value="X-ray"/>
    <property type="resolution" value="3.10 A"/>
    <property type="chains" value="QJ/XJ=1-105"/>
</dbReference>
<dbReference type="PDB" id="6OSI">
    <property type="method" value="X-ray"/>
    <property type="resolution" value="4.14 A"/>
    <property type="chains" value="QJ/XJ=1-105"/>
</dbReference>
<dbReference type="PDB" id="6OTR">
    <property type="method" value="X-ray"/>
    <property type="resolution" value="3.12 A"/>
    <property type="chains" value="QJ/XJ=1-105"/>
</dbReference>
<dbReference type="PDB" id="6OXA">
    <property type="method" value="X-ray"/>
    <property type="resolution" value="3.25 A"/>
    <property type="chains" value="QJ/XJ=1-105"/>
</dbReference>
<dbReference type="PDB" id="6OXI">
    <property type="method" value="X-ray"/>
    <property type="resolution" value="3.50 A"/>
    <property type="chains" value="QJ/XJ=1-105"/>
</dbReference>
<dbReference type="PDB" id="6Q95">
    <property type="method" value="EM"/>
    <property type="resolution" value="3.70 A"/>
    <property type="chains" value="o=3-101"/>
</dbReference>
<dbReference type="PDB" id="6QNQ">
    <property type="method" value="X-ray"/>
    <property type="resolution" value="3.50 A"/>
    <property type="chains" value="1A/1I=1-105"/>
</dbReference>
<dbReference type="PDB" id="6QNR">
    <property type="method" value="X-ray"/>
    <property type="resolution" value="3.10 A"/>
    <property type="chains" value="1A/1I=1-105"/>
</dbReference>
<dbReference type="PDB" id="6UCQ">
    <property type="method" value="X-ray"/>
    <property type="resolution" value="3.50 A"/>
    <property type="chains" value="1j/2j=1-105"/>
</dbReference>
<dbReference type="PDB" id="6UO1">
    <property type="method" value="X-ray"/>
    <property type="resolution" value="2.95 A"/>
    <property type="chains" value="1j/2j=1-105"/>
</dbReference>
<dbReference type="PDB" id="6XHV">
    <property type="method" value="X-ray"/>
    <property type="resolution" value="2.40 A"/>
    <property type="chains" value="1j/2j=1-105"/>
</dbReference>
<dbReference type="PDB" id="6XHW">
    <property type="method" value="X-ray"/>
    <property type="resolution" value="2.50 A"/>
    <property type="chains" value="1j/2j=1-105"/>
</dbReference>
<dbReference type="PDB" id="6XHX">
    <property type="method" value="X-ray"/>
    <property type="resolution" value="2.55 A"/>
    <property type="chains" value="1j/2j=1-105"/>
</dbReference>
<dbReference type="PDB" id="6XHY">
    <property type="method" value="X-ray"/>
    <property type="resolution" value="2.60 A"/>
    <property type="chains" value="1j/2j=1-105"/>
</dbReference>
<dbReference type="PDB" id="6XQD">
    <property type="method" value="X-ray"/>
    <property type="resolution" value="2.80 A"/>
    <property type="chains" value="1j/2j=1-105"/>
</dbReference>
<dbReference type="PDB" id="6XQE">
    <property type="method" value="X-ray"/>
    <property type="resolution" value="3.00 A"/>
    <property type="chains" value="1j/2j=1-105"/>
</dbReference>
<dbReference type="PDB" id="7AZO">
    <property type="method" value="X-ray"/>
    <property type="resolution" value="3.30 A"/>
    <property type="chains" value="S10A/S10B=1-105"/>
</dbReference>
<dbReference type="PDB" id="7AZS">
    <property type="method" value="X-ray"/>
    <property type="resolution" value="3.10 A"/>
    <property type="chains" value="S10A/S10B=1-105"/>
</dbReference>
<dbReference type="PDB" id="7DUG">
    <property type="method" value="X-ray"/>
    <property type="resolution" value="3.75 A"/>
    <property type="chains" value="J=1-105"/>
</dbReference>
<dbReference type="PDB" id="7DUH">
    <property type="method" value="X-ray"/>
    <property type="resolution" value="3.75 A"/>
    <property type="chains" value="J=1-105"/>
</dbReference>
<dbReference type="PDB" id="7DUI">
    <property type="method" value="X-ray"/>
    <property type="resolution" value="3.62 A"/>
    <property type="chains" value="J=1-105"/>
</dbReference>
<dbReference type="PDB" id="7DUJ">
    <property type="method" value="X-ray"/>
    <property type="resolution" value="3.75 A"/>
    <property type="chains" value="J=1-105"/>
</dbReference>
<dbReference type="PDB" id="7DUK">
    <property type="method" value="X-ray"/>
    <property type="resolution" value="3.60 A"/>
    <property type="chains" value="J=1-105"/>
</dbReference>
<dbReference type="PDB" id="7DUL">
    <property type="method" value="X-ray"/>
    <property type="resolution" value="3.62 A"/>
    <property type="chains" value="J=1-105"/>
</dbReference>
<dbReference type="PDB" id="7JQL">
    <property type="method" value="X-ray"/>
    <property type="resolution" value="3.00 A"/>
    <property type="chains" value="1j/2j=1-105"/>
</dbReference>
<dbReference type="PDB" id="7JQM">
    <property type="method" value="X-ray"/>
    <property type="resolution" value="3.05 A"/>
    <property type="chains" value="1j/2j=1-105"/>
</dbReference>
<dbReference type="PDB" id="7LH5">
    <property type="method" value="X-ray"/>
    <property type="resolution" value="3.27 A"/>
    <property type="chains" value="AJ/CJ=1-105"/>
</dbReference>
<dbReference type="PDB" id="7MD7">
    <property type="method" value="X-ray"/>
    <property type="resolution" value="2.80 A"/>
    <property type="chains" value="1j/2j=1-105"/>
</dbReference>
<dbReference type="PDB" id="7RQ8">
    <property type="method" value="X-ray"/>
    <property type="resolution" value="2.50 A"/>
    <property type="chains" value="1j/2j=1-105"/>
</dbReference>
<dbReference type="PDB" id="7RQ9">
    <property type="method" value="X-ray"/>
    <property type="resolution" value="2.60 A"/>
    <property type="chains" value="1j/2j=1-105"/>
</dbReference>
<dbReference type="PDB" id="7RQA">
    <property type="method" value="X-ray"/>
    <property type="resolution" value="2.40 A"/>
    <property type="chains" value="1j/2j=1-105"/>
</dbReference>
<dbReference type="PDB" id="7RQB">
    <property type="method" value="X-ray"/>
    <property type="resolution" value="2.45 A"/>
    <property type="chains" value="1j/2j=1-105"/>
</dbReference>
<dbReference type="PDB" id="7RQC">
    <property type="method" value="X-ray"/>
    <property type="resolution" value="2.50 A"/>
    <property type="chains" value="1j/2j=1-105"/>
</dbReference>
<dbReference type="PDB" id="7RQD">
    <property type="method" value="X-ray"/>
    <property type="resolution" value="2.50 A"/>
    <property type="chains" value="1j/2j=1-105"/>
</dbReference>
<dbReference type="PDB" id="7RQE">
    <property type="method" value="X-ray"/>
    <property type="resolution" value="2.40 A"/>
    <property type="chains" value="1j/2j=1-105"/>
</dbReference>
<dbReference type="PDB" id="7U2H">
    <property type="method" value="X-ray"/>
    <property type="resolution" value="2.55 A"/>
    <property type="chains" value="1j/2j=1-105"/>
</dbReference>
<dbReference type="PDB" id="7U2I">
    <property type="method" value="X-ray"/>
    <property type="resolution" value="2.55 A"/>
    <property type="chains" value="1j/2j=1-105"/>
</dbReference>
<dbReference type="PDB" id="7U2J">
    <property type="method" value="X-ray"/>
    <property type="resolution" value="2.55 A"/>
    <property type="chains" value="1j/2j=1-105"/>
</dbReference>
<dbReference type="PDB" id="7V2L">
    <property type="method" value="EM"/>
    <property type="resolution" value="3.30 A"/>
    <property type="chains" value="J=1-105"/>
</dbReference>
<dbReference type="PDB" id="7V2M">
    <property type="method" value="EM"/>
    <property type="resolution" value="3.40 A"/>
    <property type="chains" value="J=1-105"/>
</dbReference>
<dbReference type="PDB" id="7V2N">
    <property type="method" value="EM"/>
    <property type="resolution" value="3.60 A"/>
    <property type="chains" value="J=1-105"/>
</dbReference>
<dbReference type="PDB" id="7V2O">
    <property type="method" value="EM"/>
    <property type="resolution" value="3.50 A"/>
    <property type="chains" value="J=1-105"/>
</dbReference>
<dbReference type="PDB" id="7V2P">
    <property type="method" value="EM"/>
    <property type="resolution" value="3.30 A"/>
    <property type="chains" value="J=1-105"/>
</dbReference>
<dbReference type="PDB" id="7V2Q">
    <property type="method" value="EM"/>
    <property type="resolution" value="3.24 A"/>
    <property type="chains" value="J=1-105"/>
</dbReference>
<dbReference type="PDB" id="8CVJ">
    <property type="method" value="X-ray"/>
    <property type="resolution" value="2.40 A"/>
    <property type="chains" value="1j/2j=1-105"/>
</dbReference>
<dbReference type="PDB" id="8CVK">
    <property type="method" value="X-ray"/>
    <property type="resolution" value="2.50 A"/>
    <property type="chains" value="1j/2j=1-105"/>
</dbReference>
<dbReference type="PDB" id="8CVL">
    <property type="method" value="X-ray"/>
    <property type="resolution" value="2.30 A"/>
    <property type="chains" value="1j/2j=1-105"/>
</dbReference>
<dbReference type="PDB" id="8EKB">
    <property type="method" value="X-ray"/>
    <property type="resolution" value="2.70 A"/>
    <property type="chains" value="1j/2j=1-105"/>
</dbReference>
<dbReference type="PDB" id="8EV6">
    <property type="method" value="X-ray"/>
    <property type="resolution" value="2.95 A"/>
    <property type="chains" value="1j/2j=1-105"/>
</dbReference>
<dbReference type="PDB" id="8EV7">
    <property type="method" value="X-ray"/>
    <property type="resolution" value="2.89 A"/>
    <property type="chains" value="1j/2j=1-105"/>
</dbReference>
<dbReference type="PDB" id="8FC1">
    <property type="method" value="X-ray"/>
    <property type="resolution" value="2.50 A"/>
    <property type="chains" value="1j/2j=1-105"/>
</dbReference>
<dbReference type="PDB" id="8FC2">
    <property type="method" value="X-ray"/>
    <property type="resolution" value="2.50 A"/>
    <property type="chains" value="1j/2j=1-105"/>
</dbReference>
<dbReference type="PDB" id="8FC3">
    <property type="method" value="X-ray"/>
    <property type="resolution" value="2.60 A"/>
    <property type="chains" value="1j/2j=1-105"/>
</dbReference>
<dbReference type="PDB" id="8FC4">
    <property type="method" value="X-ray"/>
    <property type="resolution" value="2.45 A"/>
    <property type="chains" value="1j/2j=1-105"/>
</dbReference>
<dbReference type="PDB" id="8FC5">
    <property type="method" value="X-ray"/>
    <property type="resolution" value="2.65 A"/>
    <property type="chains" value="1j/2j=1-105"/>
</dbReference>
<dbReference type="PDB" id="8FC6">
    <property type="method" value="X-ray"/>
    <property type="resolution" value="2.35 A"/>
    <property type="chains" value="1j/2j=1-105"/>
</dbReference>
<dbReference type="PDB" id="8FOM">
    <property type="method" value="X-ray"/>
    <property type="resolution" value="3.58 A"/>
    <property type="chains" value="QJ/XJ=1-105"/>
</dbReference>
<dbReference type="PDB" id="8FON">
    <property type="method" value="X-ray"/>
    <property type="resolution" value="3.64 A"/>
    <property type="chains" value="QJ/XJ=1-105"/>
</dbReference>
<dbReference type="PDB" id="8G29">
    <property type="method" value="X-ray"/>
    <property type="resolution" value="2.55 A"/>
    <property type="chains" value="1j/2j=1-105"/>
</dbReference>
<dbReference type="PDB" id="8G2A">
    <property type="method" value="X-ray"/>
    <property type="resolution" value="2.45 A"/>
    <property type="chains" value="1j/2j=1-105"/>
</dbReference>
<dbReference type="PDB" id="8G2B">
    <property type="method" value="X-ray"/>
    <property type="resolution" value="2.55 A"/>
    <property type="chains" value="1j/2j=1-105"/>
</dbReference>
<dbReference type="PDB" id="8G2C">
    <property type="method" value="X-ray"/>
    <property type="resolution" value="2.65 A"/>
    <property type="chains" value="1j/2j=1-105"/>
</dbReference>
<dbReference type="PDB" id="8G2D">
    <property type="method" value="X-ray"/>
    <property type="resolution" value="2.70 A"/>
    <property type="chains" value="1j/2j=1-105"/>
</dbReference>
<dbReference type="PDB" id="8T8B">
    <property type="method" value="X-ray"/>
    <property type="resolution" value="2.65 A"/>
    <property type="chains" value="1j/2j=1-105"/>
</dbReference>
<dbReference type="PDB" id="8T8C">
    <property type="method" value="X-ray"/>
    <property type="resolution" value="2.60 A"/>
    <property type="chains" value="1j/2j=1-105"/>
</dbReference>
<dbReference type="PDB" id="8UD6">
    <property type="method" value="X-ray"/>
    <property type="resolution" value="2.70 A"/>
    <property type="chains" value="1j/2j=1-105"/>
</dbReference>
<dbReference type="PDB" id="8UD7">
    <property type="method" value="X-ray"/>
    <property type="resolution" value="2.55 A"/>
    <property type="chains" value="1j/2j=1-105"/>
</dbReference>
<dbReference type="PDB" id="8UD8">
    <property type="method" value="X-ray"/>
    <property type="resolution" value="2.60 A"/>
    <property type="chains" value="1j/2j=1-105"/>
</dbReference>
<dbReference type="PDB" id="8UVR">
    <property type="method" value="X-ray"/>
    <property type="resolution" value="2.60 A"/>
    <property type="chains" value="1j/2j=1-105"/>
</dbReference>
<dbReference type="PDB" id="8UVS">
    <property type="method" value="X-ray"/>
    <property type="resolution" value="2.75 A"/>
    <property type="chains" value="1j/2j=1-105"/>
</dbReference>
<dbReference type="PDB" id="8VTU">
    <property type="method" value="X-ray"/>
    <property type="resolution" value="2.40 A"/>
    <property type="chains" value="1j/2j=1-105"/>
</dbReference>
<dbReference type="PDB" id="8VTV">
    <property type="method" value="X-ray"/>
    <property type="resolution" value="2.55 A"/>
    <property type="chains" value="1j/2j=1-105"/>
</dbReference>
<dbReference type="PDB" id="8VTW">
    <property type="method" value="X-ray"/>
    <property type="resolution" value="2.35 A"/>
    <property type="chains" value="1j/2j=1-105"/>
</dbReference>
<dbReference type="PDB" id="8VTX">
    <property type="method" value="X-ray"/>
    <property type="resolution" value="2.40 A"/>
    <property type="chains" value="1j/2j=1-105"/>
</dbReference>
<dbReference type="PDB" id="8VTY">
    <property type="method" value="X-ray"/>
    <property type="resolution" value="2.60 A"/>
    <property type="chains" value="1j/2j=1-105"/>
</dbReference>
<dbReference type="PDB" id="9B00">
    <property type="method" value="X-ray"/>
    <property type="resolution" value="2.80 A"/>
    <property type="chains" value="1j/2j=1-105"/>
</dbReference>
<dbReference type="PDB" id="9D0J">
    <property type="method" value="X-ray"/>
    <property type="resolution" value="2.50 A"/>
    <property type="chains" value="1j/2j=1-105"/>
</dbReference>
<dbReference type="PDB" id="9D7R">
    <property type="method" value="X-ray"/>
    <property type="resolution" value="2.70 A"/>
    <property type="chains" value="1j/2j=1-105"/>
</dbReference>
<dbReference type="PDB" id="9D7S">
    <property type="method" value="X-ray"/>
    <property type="resolution" value="2.85 A"/>
    <property type="chains" value="1j/2j=1-105"/>
</dbReference>
<dbReference type="PDB" id="9D7T">
    <property type="method" value="X-ray"/>
    <property type="resolution" value="2.70 A"/>
    <property type="chains" value="1j/2j=1-105"/>
</dbReference>
<dbReference type="PDB" id="9DFC">
    <property type="method" value="X-ray"/>
    <property type="resolution" value="2.50 A"/>
    <property type="chains" value="1j/2j=1-105"/>
</dbReference>
<dbReference type="PDB" id="9DFD">
    <property type="method" value="X-ray"/>
    <property type="resolution" value="2.60 A"/>
    <property type="chains" value="1j/2j=1-105"/>
</dbReference>
<dbReference type="PDB" id="9DFE">
    <property type="method" value="X-ray"/>
    <property type="resolution" value="2.60 A"/>
    <property type="chains" value="1j/2j=1-105"/>
</dbReference>
<dbReference type="PDBsum" id="1FJG"/>
<dbReference type="PDBsum" id="1HNW"/>
<dbReference type="PDBsum" id="1HNX"/>
<dbReference type="PDBsum" id="1HNZ"/>
<dbReference type="PDBsum" id="1HR0"/>
<dbReference type="PDBsum" id="1I94"/>
<dbReference type="PDBsum" id="1I95"/>
<dbReference type="PDBsum" id="1I96"/>
<dbReference type="PDBsum" id="1I97"/>
<dbReference type="PDBsum" id="1IBK"/>
<dbReference type="PDBsum" id="1IBL"/>
<dbReference type="PDBsum" id="1IBM"/>
<dbReference type="PDBsum" id="1J5E"/>
<dbReference type="PDBsum" id="1JGO"/>
<dbReference type="PDBsum" id="1JGP"/>
<dbReference type="PDBsum" id="1JGQ"/>
<dbReference type="PDBsum" id="1ML5"/>
<dbReference type="PDBsum" id="1N32"/>
<dbReference type="PDBsum" id="1N33"/>
<dbReference type="PDBsum" id="1N34"/>
<dbReference type="PDBsum" id="1N36"/>
<dbReference type="PDBsum" id="1VVJ"/>
<dbReference type="PDBsum" id="1VY4"/>
<dbReference type="PDBsum" id="1VY5"/>
<dbReference type="PDBsum" id="1VY6"/>
<dbReference type="PDBsum" id="1VY7"/>
<dbReference type="PDBsum" id="1XMO"/>
<dbReference type="PDBsum" id="1XMQ"/>
<dbReference type="PDBsum" id="1XNQ"/>
<dbReference type="PDBsum" id="1XNR"/>
<dbReference type="PDBsum" id="2E5L"/>
<dbReference type="PDBsum" id="2F4V"/>
<dbReference type="PDBsum" id="2HHH"/>
<dbReference type="PDBsum" id="2UU9"/>
<dbReference type="PDBsum" id="2UUA"/>
<dbReference type="PDBsum" id="2UUB"/>
<dbReference type="PDBsum" id="2UUC"/>
<dbReference type="PDBsum" id="2UXB"/>
<dbReference type="PDBsum" id="2UXC"/>
<dbReference type="PDBsum" id="2UXD"/>
<dbReference type="PDBsum" id="2VQE"/>
<dbReference type="PDBsum" id="2VQF"/>
<dbReference type="PDBsum" id="2ZM6"/>
<dbReference type="PDBsum" id="3OTO"/>
<dbReference type="PDBsum" id="3T1H"/>
<dbReference type="PDBsum" id="3T1Y"/>
<dbReference type="PDBsum" id="4AQY"/>
<dbReference type="PDBsum" id="4B3M"/>
<dbReference type="PDBsum" id="4B3R"/>
<dbReference type="PDBsum" id="4B3S"/>
<dbReference type="PDBsum" id="4B3T"/>
<dbReference type="PDBsum" id="4DR1"/>
<dbReference type="PDBsum" id="4DR2"/>
<dbReference type="PDBsum" id="4DR3"/>
<dbReference type="PDBsum" id="4DR4"/>
<dbReference type="PDBsum" id="4DR5"/>
<dbReference type="PDBsum" id="4DR6"/>
<dbReference type="PDBsum" id="4DR7"/>
<dbReference type="PDBsum" id="4DUY"/>
<dbReference type="PDBsum" id="4DUZ"/>
<dbReference type="PDBsum" id="4DV0"/>
<dbReference type="PDBsum" id="4DV1"/>
<dbReference type="PDBsum" id="4DV2"/>
<dbReference type="PDBsum" id="4DV3"/>
<dbReference type="PDBsum" id="4DV4"/>
<dbReference type="PDBsum" id="4DV5"/>
<dbReference type="PDBsum" id="4DV6"/>
<dbReference type="PDBsum" id="4DV7"/>
<dbReference type="PDBsum" id="4GKJ"/>
<dbReference type="PDBsum" id="4GKK"/>
<dbReference type="PDBsum" id="4JI0"/>
<dbReference type="PDBsum" id="4JI1"/>
<dbReference type="PDBsum" id="4JI2"/>
<dbReference type="PDBsum" id="4JI3"/>
<dbReference type="PDBsum" id="4JI4"/>
<dbReference type="PDBsum" id="4JI5"/>
<dbReference type="PDBsum" id="4JI6"/>
<dbReference type="PDBsum" id="4JI7"/>
<dbReference type="PDBsum" id="4JI8"/>
<dbReference type="PDBsum" id="4JV5"/>
<dbReference type="PDBsum" id="4JYA"/>
<dbReference type="PDBsum" id="4K0K"/>
<dbReference type="PDBsum" id="4KHP"/>
<dbReference type="PDBsum" id="4L47"/>
<dbReference type="PDBsum" id="4L71"/>
<dbReference type="PDBsum" id="4LEL"/>
<dbReference type="PDBsum" id="4LF4"/>
<dbReference type="PDBsum" id="4LF5"/>
<dbReference type="PDBsum" id="4LF6"/>
<dbReference type="PDBsum" id="4LF7"/>
<dbReference type="PDBsum" id="4LF8"/>
<dbReference type="PDBsum" id="4LF9"/>
<dbReference type="PDBsum" id="4LFA"/>
<dbReference type="PDBsum" id="4LFB"/>
<dbReference type="PDBsum" id="4LFC"/>
<dbReference type="PDBsum" id="4LFZ"/>
<dbReference type="PDBsum" id="4LNT"/>
<dbReference type="PDBsum" id="4LSK"/>
<dbReference type="PDBsum" id="4LT8"/>
<dbReference type="PDBsum" id="4NXM"/>
<dbReference type="PDBsum" id="4NXN"/>
<dbReference type="PDBsum" id="4OX9"/>
<dbReference type="PDBsum" id="4P6F"/>
<dbReference type="PDBsum" id="4P70"/>
<dbReference type="PDBsum" id="4TUA"/>
<dbReference type="PDBsum" id="4TUB"/>
<dbReference type="PDBsum" id="4TUC"/>
<dbReference type="PDBsum" id="4TUD"/>
<dbReference type="PDBsum" id="4TUE"/>
<dbReference type="PDBsum" id="4V42"/>
<dbReference type="PDBsum" id="4V49"/>
<dbReference type="PDBsum" id="4V4A"/>
<dbReference type="PDBsum" id="4V4I"/>
<dbReference type="PDBsum" id="4V4P"/>
<dbReference type="PDBsum" id="4V4R"/>
<dbReference type="PDBsum" id="4V4S"/>
<dbReference type="PDBsum" id="4V4T"/>
<dbReference type="PDBsum" id="4V4X"/>
<dbReference type="PDBsum" id="4V4Y"/>
<dbReference type="PDBsum" id="4V4Z"/>
<dbReference type="PDBsum" id="4V51"/>
<dbReference type="PDBsum" id="4V5A"/>
<dbReference type="PDBsum" id="4V5C"/>
<dbReference type="PDBsum" id="4V5D"/>
<dbReference type="PDBsum" id="4V5E"/>
<dbReference type="PDBsum" id="4V5F"/>
<dbReference type="PDBsum" id="4V5G"/>
<dbReference type="PDBsum" id="4V5J"/>
<dbReference type="PDBsum" id="4V5K"/>
<dbReference type="PDBsum" id="4V5L"/>
<dbReference type="PDBsum" id="4V5M"/>
<dbReference type="PDBsum" id="4V5N"/>
<dbReference type="PDBsum" id="4V5P"/>
<dbReference type="PDBsum" id="4V5Q"/>
<dbReference type="PDBsum" id="4V5R"/>
<dbReference type="PDBsum" id="4V5S"/>
<dbReference type="PDBsum" id="4V68"/>
<dbReference type="PDBsum" id="4V6A"/>
<dbReference type="PDBsum" id="4V6F"/>
<dbReference type="PDBsum" id="4V6G"/>
<dbReference type="PDBsum" id="4V7J"/>
<dbReference type="PDBsum" id="4V7K"/>
<dbReference type="PDBsum" id="4V7L"/>
<dbReference type="PDBsum" id="4V7M"/>
<dbReference type="PDBsum" id="4V7W"/>
<dbReference type="PDBsum" id="4V7X"/>
<dbReference type="PDBsum" id="4V7Y"/>
<dbReference type="PDBsum" id="4V7Z"/>
<dbReference type="PDBsum" id="4V87"/>
<dbReference type="PDBsum" id="4V8A"/>
<dbReference type="PDBsum" id="4V8B"/>
<dbReference type="PDBsum" id="4V8C"/>
<dbReference type="PDBsum" id="4V8D"/>
<dbReference type="PDBsum" id="4V8E"/>
<dbReference type="PDBsum" id="4V8F"/>
<dbReference type="PDBsum" id="4V8G"/>
<dbReference type="PDBsum" id="4V8H"/>
<dbReference type="PDBsum" id="4V8I"/>
<dbReference type="PDBsum" id="4V8J"/>
<dbReference type="PDBsum" id="4V8N"/>
<dbReference type="PDBsum" id="4V8O"/>
<dbReference type="PDBsum" id="4V8Q"/>
<dbReference type="PDBsum" id="4V8U"/>
<dbReference type="PDBsum" id="4V8X"/>
<dbReference type="PDBsum" id="4V90"/>
<dbReference type="PDBsum" id="4V95"/>
<dbReference type="PDBsum" id="4V97"/>
<dbReference type="PDBsum" id="4V9A"/>
<dbReference type="PDBsum" id="4V9B"/>
<dbReference type="PDBsum" id="4V9H"/>
<dbReference type="PDBsum" id="4V9I"/>
<dbReference type="PDBsum" id="4V9R"/>
<dbReference type="PDBsum" id="4V9S"/>
<dbReference type="PDBsum" id="4W2E"/>
<dbReference type="PDBsum" id="4W2F"/>
<dbReference type="PDBsum" id="4W2G"/>
<dbReference type="PDBsum" id="4W2H"/>
<dbReference type="PDBsum" id="4W2I"/>
<dbReference type="PDBsum" id="4W4G"/>
<dbReference type="PDBsum" id="4WPO"/>
<dbReference type="PDBsum" id="4WQ1"/>
<dbReference type="PDBsum" id="4WQF"/>
<dbReference type="PDBsum" id="4WQR"/>
<dbReference type="PDBsum" id="4WQU"/>
<dbReference type="PDBsum" id="4WQY"/>
<dbReference type="PDBsum" id="4WR6"/>
<dbReference type="PDBsum" id="4WRA"/>
<dbReference type="PDBsum" id="4WRO"/>
<dbReference type="PDBsum" id="4WSD"/>
<dbReference type="PDBsum" id="4WSM"/>
<dbReference type="PDBsum" id="4WT1"/>
<dbReference type="PDBsum" id="4WT8"/>
<dbReference type="PDBsum" id="4WU1"/>
<dbReference type="PDBsum" id="4WZD"/>
<dbReference type="PDBsum" id="4WZO"/>
<dbReference type="PDBsum" id="4X62"/>
<dbReference type="PDBsum" id="4X64"/>
<dbReference type="PDBsum" id="4X65"/>
<dbReference type="PDBsum" id="4X66"/>
<dbReference type="PDBsum" id="4Y4O"/>
<dbReference type="PDBsum" id="4Y4P"/>
<dbReference type="PDBsum" id="4YHH"/>
<dbReference type="PDBsum" id="4YPB"/>
<dbReference type="PDBsum" id="4YY3"/>
<dbReference type="PDBsum" id="4YZV"/>
<dbReference type="PDBsum" id="4Z3S"/>
<dbReference type="PDBsum" id="4Z8C"/>
<dbReference type="PDBsum" id="4ZER"/>
<dbReference type="PDBsum" id="4ZSN"/>
<dbReference type="PDBsum" id="5A9Z"/>
<dbReference type="PDBsum" id="5AA0"/>
<dbReference type="PDBsum" id="5BR8"/>
<dbReference type="PDBsum" id="5CZP"/>
<dbReference type="PDBsum" id="5D8B"/>
<dbReference type="PDBsum" id="5DFE"/>
<dbReference type="PDBsum" id="5DOX"/>
<dbReference type="PDBsum" id="5DOY"/>
<dbReference type="PDBsum" id="5E7K"/>
<dbReference type="PDBsum" id="5E81"/>
<dbReference type="PDBsum" id="5EL4"/>
<dbReference type="PDBsum" id="5EL5"/>
<dbReference type="PDBsum" id="5EL6"/>
<dbReference type="PDBsum" id="5EL7"/>
<dbReference type="PDBsum" id="5F8K"/>
<dbReference type="PDBsum" id="5FDU"/>
<dbReference type="PDBsum" id="5FDV"/>
<dbReference type="PDBsum" id="5HAU"/>
<dbReference type="PDBsum" id="5HCP"/>
<dbReference type="PDBsum" id="5HCQ"/>
<dbReference type="PDBsum" id="5HCR"/>
<dbReference type="PDBsum" id="5HD1"/>
<dbReference type="PDBsum" id="5IB7"/>
<dbReference type="PDBsum" id="5IB8"/>
<dbReference type="PDBsum" id="5IBB"/>
<dbReference type="PDBsum" id="5IMQ"/>
<dbReference type="PDBsum" id="5IMR"/>
<dbReference type="PDBsum" id="5IWA"/>
<dbReference type="PDBsum" id="5J30"/>
<dbReference type="PDBsum" id="5J3C"/>
<dbReference type="PDBsum" id="5J4B"/>
<dbReference type="PDBsum" id="5J4C"/>
<dbReference type="PDBsum" id="5J8B"/>
<dbReference type="PDBsum" id="5LMN"/>
<dbReference type="PDBsum" id="5LMO"/>
<dbReference type="PDBsum" id="5LMP"/>
<dbReference type="PDBsum" id="5LMQ"/>
<dbReference type="PDBsum" id="5LMR"/>
<dbReference type="PDBsum" id="5LMS"/>
<dbReference type="PDBsum" id="5LMT"/>
<dbReference type="PDBsum" id="5LMU"/>
<dbReference type="PDBsum" id="5LMV"/>
<dbReference type="PDBsum" id="5NDJ"/>
<dbReference type="PDBsum" id="5NDK"/>
<dbReference type="PDBsum" id="5OT7"/>
<dbReference type="PDBsum" id="5UQ7"/>
<dbReference type="PDBsum" id="5UQ8"/>
<dbReference type="PDBsum" id="5VP2"/>
<dbReference type="PDBsum" id="5VPO"/>
<dbReference type="PDBsum" id="5VPP"/>
<dbReference type="PDBsum" id="5W4K"/>
<dbReference type="PDBsum" id="5WIS"/>
<dbReference type="PDBsum" id="5WIT"/>
<dbReference type="PDBsum" id="5WNP"/>
<dbReference type="PDBsum" id="5WNQ"/>
<dbReference type="PDBsum" id="5WNR"/>
<dbReference type="PDBsum" id="5WNS"/>
<dbReference type="PDBsum" id="5WNT"/>
<dbReference type="PDBsum" id="5WNU"/>
<dbReference type="PDBsum" id="5WNV"/>
<dbReference type="PDBsum" id="5ZLU"/>
<dbReference type="PDBsum" id="6BUW"/>
<dbReference type="PDBsum" id="6BZ6"/>
<dbReference type="PDBsum" id="6BZ7"/>
<dbReference type="PDBsum" id="6BZ8"/>
<dbReference type="PDBsum" id="6C5L"/>
<dbReference type="PDBsum" id="6CAE"/>
<dbReference type="PDBsum" id="6CAO"/>
<dbReference type="PDBsum" id="6CAP"/>
<dbReference type="PDBsum" id="6CAQ"/>
<dbReference type="PDBsum" id="6CAR"/>
<dbReference type="PDBsum" id="6CAS"/>
<dbReference type="PDBsum" id="6CFJ"/>
<dbReference type="PDBsum" id="6CFK"/>
<dbReference type="PDBsum" id="6CFL"/>
<dbReference type="PDBsum" id="6CZR"/>
<dbReference type="PDBsum" id="6DTI"/>
<dbReference type="PDBsum" id="6FKR"/>
<dbReference type="PDBsum" id="6GSJ"/>
<dbReference type="PDBsum" id="6GSK"/>
<dbReference type="PDBsum" id="6GSL"/>
<dbReference type="PDBsum" id="6GZQ"/>
<dbReference type="PDBsum" id="6GZX"/>
<dbReference type="PDBsum" id="6GZZ"/>
<dbReference type="PDBsum" id="6MKN"/>
<dbReference type="PDBsum" id="6MPF"/>
<dbReference type="PDBsum" id="6MPI"/>
<dbReference type="PDBsum" id="6N9E"/>
<dbReference type="PDBsum" id="6N9F"/>
<dbReference type="PDBsum" id="6ND5"/>
<dbReference type="PDBsum" id="6ND6"/>
<dbReference type="PDBsum" id="6NDK"/>
<dbReference type="PDBsum" id="6NSH"/>
<dbReference type="PDBsum" id="6NTA"/>
<dbReference type="PDBsum" id="6NUO"/>
<dbReference type="PDBsum" id="6NWY"/>
<dbReference type="PDBsum" id="6NY6"/>
<dbReference type="PDBsum" id="6O3M"/>
<dbReference type="PDBsum" id="6O97"/>
<dbReference type="PDBsum" id="6OF1"/>
<dbReference type="PDBsum" id="6OF6"/>
<dbReference type="PDBsum" id="6OJ2"/>
<dbReference type="PDBsum" id="6OPE"/>
<dbReference type="PDBsum" id="6ORD"/>
<dbReference type="PDBsum" id="6OSI"/>
<dbReference type="PDBsum" id="6OTR"/>
<dbReference type="PDBsum" id="6OXA"/>
<dbReference type="PDBsum" id="6OXI"/>
<dbReference type="PDBsum" id="6Q95"/>
<dbReference type="PDBsum" id="6QNQ"/>
<dbReference type="PDBsum" id="6QNR"/>
<dbReference type="PDBsum" id="6UCQ"/>
<dbReference type="PDBsum" id="6UO1"/>
<dbReference type="PDBsum" id="6XHV"/>
<dbReference type="PDBsum" id="6XHW"/>
<dbReference type="PDBsum" id="6XHX"/>
<dbReference type="PDBsum" id="6XHY"/>
<dbReference type="PDBsum" id="6XQD"/>
<dbReference type="PDBsum" id="6XQE"/>
<dbReference type="PDBsum" id="7AZO"/>
<dbReference type="PDBsum" id="7AZS"/>
<dbReference type="PDBsum" id="7DUG"/>
<dbReference type="PDBsum" id="7DUH"/>
<dbReference type="PDBsum" id="7DUI"/>
<dbReference type="PDBsum" id="7DUJ"/>
<dbReference type="PDBsum" id="7DUK"/>
<dbReference type="PDBsum" id="7DUL"/>
<dbReference type="PDBsum" id="7JQL"/>
<dbReference type="PDBsum" id="7JQM"/>
<dbReference type="PDBsum" id="7LH5"/>
<dbReference type="PDBsum" id="7MD7"/>
<dbReference type="PDBsum" id="7RQ8"/>
<dbReference type="PDBsum" id="7RQ9"/>
<dbReference type="PDBsum" id="7RQA"/>
<dbReference type="PDBsum" id="7RQB"/>
<dbReference type="PDBsum" id="7RQC"/>
<dbReference type="PDBsum" id="7RQD"/>
<dbReference type="PDBsum" id="7RQE"/>
<dbReference type="PDBsum" id="7U2H"/>
<dbReference type="PDBsum" id="7U2I"/>
<dbReference type="PDBsum" id="7U2J"/>
<dbReference type="PDBsum" id="7V2L"/>
<dbReference type="PDBsum" id="7V2M"/>
<dbReference type="PDBsum" id="7V2N"/>
<dbReference type="PDBsum" id="7V2O"/>
<dbReference type="PDBsum" id="7V2P"/>
<dbReference type="PDBsum" id="7V2Q"/>
<dbReference type="PDBsum" id="8CVJ"/>
<dbReference type="PDBsum" id="8CVK"/>
<dbReference type="PDBsum" id="8CVL"/>
<dbReference type="PDBsum" id="8EKB"/>
<dbReference type="PDBsum" id="8EV6"/>
<dbReference type="PDBsum" id="8EV7"/>
<dbReference type="PDBsum" id="8FC1"/>
<dbReference type="PDBsum" id="8FC2"/>
<dbReference type="PDBsum" id="8FC3"/>
<dbReference type="PDBsum" id="8FC4"/>
<dbReference type="PDBsum" id="8FC5"/>
<dbReference type="PDBsum" id="8FC6"/>
<dbReference type="PDBsum" id="8FOM"/>
<dbReference type="PDBsum" id="8FON"/>
<dbReference type="PDBsum" id="8G29"/>
<dbReference type="PDBsum" id="8G2A"/>
<dbReference type="PDBsum" id="8G2B"/>
<dbReference type="PDBsum" id="8G2C"/>
<dbReference type="PDBsum" id="8G2D"/>
<dbReference type="PDBsum" id="8T8B"/>
<dbReference type="PDBsum" id="8T8C"/>
<dbReference type="PDBsum" id="8UD6"/>
<dbReference type="PDBsum" id="8UD7"/>
<dbReference type="PDBsum" id="8UD8"/>
<dbReference type="PDBsum" id="8UVR"/>
<dbReference type="PDBsum" id="8UVS"/>
<dbReference type="PDBsum" id="8VTU"/>
<dbReference type="PDBsum" id="8VTV"/>
<dbReference type="PDBsum" id="8VTW"/>
<dbReference type="PDBsum" id="8VTX"/>
<dbReference type="PDBsum" id="8VTY"/>
<dbReference type="PDBsum" id="9B00"/>
<dbReference type="PDBsum" id="9D0J"/>
<dbReference type="PDBsum" id="9D7R"/>
<dbReference type="PDBsum" id="9D7S"/>
<dbReference type="PDBsum" id="9D7T"/>
<dbReference type="PDBsum" id="9DFC"/>
<dbReference type="PDBsum" id="9DFD"/>
<dbReference type="PDBsum" id="9DFE"/>
<dbReference type="EMDB" id="EMD-0101"/>
<dbReference type="EMDB" id="EMD-0104"/>
<dbReference type="EMDB" id="EMD-0105"/>
<dbReference type="EMDB" id="EMD-31655"/>
<dbReference type="EMDB" id="EMD-31656"/>
<dbReference type="EMDB" id="EMD-31657"/>
<dbReference type="EMDB" id="EMD-31658"/>
<dbReference type="EMDB" id="EMD-31659"/>
<dbReference type="EMDB" id="EMD-31660"/>
<dbReference type="EMDB" id="EMD-3852"/>
<dbReference type="EMDB" id="EMD-4073"/>
<dbReference type="EMDB" id="EMD-4074"/>
<dbReference type="EMDB" id="EMD-4075"/>
<dbReference type="EMDB" id="EMD-4076"/>
<dbReference type="EMDB" id="EMD-4077"/>
<dbReference type="EMDB" id="EMD-4078"/>
<dbReference type="EMDB" id="EMD-4079"/>
<dbReference type="EMDB" id="EMD-4080"/>
<dbReference type="EMDB" id="EMD-4083"/>
<dbReference type="EMDB" id="EMD-4475"/>
<dbReference type="EMDB" id="EMD-6934"/>
<dbReference type="EMDB" id="EMD-8596"/>
<dbReference type="EMDB" id="EMD-8597"/>
<dbReference type="SMR" id="Q5SHN7"/>
<dbReference type="IntAct" id="Q5SHN7">
    <property type="interactions" value="32"/>
</dbReference>
<dbReference type="DrugBank" id="DB08185">
    <property type="generic name" value="2-METHYLTHIO-N6-ISOPENTENYL-ADENOSINE-5'-MONOPHOSPHATE"/>
</dbReference>
<dbReference type="DrugBank" id="DB01421">
    <property type="generic name" value="Paromomycin"/>
</dbReference>
<dbReference type="EnsemblBacteria" id="BAD71516">
    <property type="protein sequence ID" value="BAD71516"/>
    <property type="gene ID" value="BAD71516"/>
</dbReference>
<dbReference type="GeneID" id="3167932"/>
<dbReference type="KEGG" id="ttj:TTHA1693"/>
<dbReference type="PATRIC" id="fig|300852.9.peg.1663"/>
<dbReference type="eggNOG" id="COG0051">
    <property type="taxonomic scope" value="Bacteria"/>
</dbReference>
<dbReference type="HOGENOM" id="CLU_122625_1_3_0"/>
<dbReference type="PhylomeDB" id="Q5SHN7"/>
<dbReference type="EvolutionaryTrace" id="Q5SHN7"/>
<dbReference type="Proteomes" id="UP000000532">
    <property type="component" value="Chromosome"/>
</dbReference>
<dbReference type="GO" id="GO:1990904">
    <property type="term" value="C:ribonucleoprotein complex"/>
    <property type="evidence" value="ECO:0007669"/>
    <property type="project" value="UniProtKB-KW"/>
</dbReference>
<dbReference type="GO" id="GO:0005840">
    <property type="term" value="C:ribosome"/>
    <property type="evidence" value="ECO:0007669"/>
    <property type="project" value="UniProtKB-KW"/>
</dbReference>
<dbReference type="GO" id="GO:0019843">
    <property type="term" value="F:rRNA binding"/>
    <property type="evidence" value="ECO:0007669"/>
    <property type="project" value="UniProtKB-KW"/>
</dbReference>
<dbReference type="GO" id="GO:0003735">
    <property type="term" value="F:structural constituent of ribosome"/>
    <property type="evidence" value="ECO:0007669"/>
    <property type="project" value="InterPro"/>
</dbReference>
<dbReference type="GO" id="GO:0000049">
    <property type="term" value="F:tRNA binding"/>
    <property type="evidence" value="ECO:0007669"/>
    <property type="project" value="UniProtKB-UniRule"/>
</dbReference>
<dbReference type="GO" id="GO:0006412">
    <property type="term" value="P:translation"/>
    <property type="evidence" value="ECO:0007669"/>
    <property type="project" value="UniProtKB-UniRule"/>
</dbReference>
<dbReference type="FunFam" id="3.30.70.600:FF:000003">
    <property type="entry name" value="30S ribosomal protein S10"/>
    <property type="match status" value="1"/>
</dbReference>
<dbReference type="Gene3D" id="3.30.70.600">
    <property type="entry name" value="Ribosomal protein S10 domain"/>
    <property type="match status" value="1"/>
</dbReference>
<dbReference type="HAMAP" id="MF_00508">
    <property type="entry name" value="Ribosomal_uS10"/>
    <property type="match status" value="1"/>
</dbReference>
<dbReference type="InterPro" id="IPR001848">
    <property type="entry name" value="Ribosomal_uS10"/>
</dbReference>
<dbReference type="InterPro" id="IPR018268">
    <property type="entry name" value="Ribosomal_uS10_CS"/>
</dbReference>
<dbReference type="InterPro" id="IPR027486">
    <property type="entry name" value="Ribosomal_uS10_dom"/>
</dbReference>
<dbReference type="InterPro" id="IPR036838">
    <property type="entry name" value="Ribosomal_uS10_dom_sf"/>
</dbReference>
<dbReference type="NCBIfam" id="NF001861">
    <property type="entry name" value="PRK00596.1"/>
    <property type="match status" value="1"/>
</dbReference>
<dbReference type="NCBIfam" id="TIGR01049">
    <property type="entry name" value="rpsJ_bact"/>
    <property type="match status" value="1"/>
</dbReference>
<dbReference type="PANTHER" id="PTHR11700">
    <property type="entry name" value="30S RIBOSOMAL PROTEIN S10 FAMILY MEMBER"/>
    <property type="match status" value="1"/>
</dbReference>
<dbReference type="Pfam" id="PF00338">
    <property type="entry name" value="Ribosomal_S10"/>
    <property type="match status" value="1"/>
</dbReference>
<dbReference type="PRINTS" id="PR00971">
    <property type="entry name" value="RIBOSOMALS10"/>
</dbReference>
<dbReference type="SMART" id="SM01403">
    <property type="entry name" value="Ribosomal_S10"/>
    <property type="match status" value="1"/>
</dbReference>
<dbReference type="SUPFAM" id="SSF54999">
    <property type="entry name" value="Ribosomal protein S10"/>
    <property type="match status" value="1"/>
</dbReference>
<dbReference type="PROSITE" id="PS00361">
    <property type="entry name" value="RIBOSOMAL_S10"/>
    <property type="match status" value="1"/>
</dbReference>